<protein>
    <recommendedName>
        <fullName evidence="33">Multifunctional-autoprocessing repeats-in-toxin</fullName>
        <shortName evidence="33">MARTX</shortName>
        <ecNumber evidence="12">3.4.22.-</ecNumber>
    </recommendedName>
    <component>
        <recommendedName>
            <fullName evidence="38">Actin cross-linking toxin F1</fullName>
            <ecNumber evidence="27">6.3.2.-</ecNumber>
        </recommendedName>
    </component>
    <component>
        <recommendedName>
            <fullName evidence="38">Actin cross-linking toxin F4</fullName>
            <ecNumber evidence="27">6.3.2.-</ecNumber>
        </recommendedName>
    </component>
    <component>
        <recommendedName>
            <fullName>N-epsilon-fatty acyltransferase F2</fullName>
            <ecNumber evidence="31">2.3.1.-</ecNumber>
        </recommendedName>
        <alternativeName>
            <fullName evidence="38">Rho inactivation domain-containing toxin F2</fullName>
            <shortName evidence="34">RIDvc</shortName>
        </alternativeName>
    </component>
    <component>
        <recommendedName>
            <fullName evidence="38">ABH effector region toxin F5</fullName>
        </recommendedName>
    </component>
    <component>
        <recommendedName>
            <fullName evidence="38">Cysteine protease domain-containing toxin F3</fullName>
            <ecNumber evidence="12">3.4.22.-</ecNumber>
        </recommendedName>
    </component>
</protein>
<sequence>MVFYLIPKRRVWLMGKPFWRSVEYFFTGNYSADDGNNNIVAIGFGGQIHAYGGDDHVTVGSIGATVYTGSGNDTVVGGSAYLKVEDSTGHLIVKGAAGYADINKSGDGNVSFAGAAGGVSIDHLGNHGDVSYGGAAAYNGITRKGLSGNVTFAGAGGYNALWHETNQGNLSFTGAGAGNKLDRTWSNRYQGSHGDVTFDGAGAANSISSRVETGNITFRGAGADNHLVRKGKVGDITLQGAGASNRIERTHQAEDVYTQTRGNIRFEGVGGYNSLYSDVAHGDIHFSGGGAYNTIIRKGSGNDFAKEGMTNAKADEIVLTKAVMSGSWIGQDHHVTAVKSASEPNTYLFAFADSTYTKINKVQLRNDPQTGELKYYSTAWYKEVNHLSNLANQDISDNGGFTAVNINGAYTLSDLKVEHQQSVTVHAVEKSLTEYEWVTYANGAVIDAKEVSLSDAKMGGHAIYADGTKVDVKAVKSNRQPNTYIYAKVLGPYTKIVVVELANDPETGALKYQARSWYKEGDHTANIANQDISSATGYNPMGKGGYSLSDLHYSVNAVRSTSETVADIEEYTDQTLFKPANDSGESSGDVRFNGAGGGNVIKSNVTRGNVHFNGGGIANVILHSSQFGNTEFNGGGAANVIVKSGEEGDLTFRGAGLANVLVHQSEQGKMDVYAGGAVNVLVRLGDGQYLAHLLAYGNISVQKGSGDSRVVMLGGYNTHTQIGSGNGLWLAAGGFNVMTQVGKGDVAAVLAGGANVLTKMGEGELTSGMLGGANVITHISNDDQLSNTTAVALGGANILTKKGKGNTLAVMGGGANVLTHVGDGTTTGVMVGGANILTKVGNGDTTGILLGVGNVLTHVGDGQTLGVMGAAGNIFTKVGDGTSIAVMIGAGNIFTHVGEGNAWALMGGLGNVFTKVGNGDALALMVAEANVFTHIGDGMSVALMLAKGNVATKVGNGTTLAAMVGNVNIFTHIGHGSTFAAMIGQANIMTKVGNDLTAALMVGKANIMTHVGDGTSLGLFAGEVNVMTKVGNGTTLAAMFGKANIMTHVGDGLTGVLALGEANIVTKLGDDFMGVVAAAKANVVTHVGDATTAAVLAGKGNILTKVGEGTTVGLLISDVGNVMTHVGDGTTIGIAKGKANLITKVGDGLGVNVTWGQANVFTQVGDGDRYNFAKGEANLITKVGDGQEVSVVQGEANIITHVGNGDDYTGAWGKANVITKVGHGQNVVLAKGEANIVTQVGDGDSFNALWSKGNIVTKVGDGMQVTAAKGQANITTTVGNGLNVTAAYGDANINTKVGDGVSVNVAWGKYNINTKVGDGLNVAVMKGKANANIHVGDGLNINASYAQNNVAIKVGNGDFYSLAVASSNTSSNKLSALFDNIKQTVLGVGGSQAINYLVQGDEASSSGTHKGRGAIATPEITKLDGFQMDAIKEVSSDLGDSLTGSVTKVDTPDLNKMQHALNVDDSSVQAPNLIVNGDFELGEHGWQSTHGVEASYAGSVYGVEGEGHGARVTELDTYTNTSLYQDLANLAQGEVIAVSFDFAKRAGLSNNEGIEVLWNGEVVFSSSGDESAWQQKNLKLTAQAGSNRIEFKGTGHNDGLGYILDNVVATSESSQQANAIREHATQNPAAQNALSDKERAEADRQRLEQEKQKQLDAVAGSQSQLESTDQQALENNGQAQRDAVKEESEAVTAELAKLAQGLDVLDGQATHTGESGDQWRNDFAGGLLDGVQSQLDDAKQLANDKIAAAKQTLSDNNSKVKESVAKSEAGVAQGEQNRAGVEQDIADAQADAEKRKADALAKGKDAQQAESDAHHAVNNAQSRGDRDVQLAENKANQAQADAQGAKQNEGDRPDRQGVTGSGLSGNAHSVEGAGETDSHVNTDSQTNADGRFSEGLTEQEQEALEGATNAVNRLQINAGIRAKNSVSSMTSMFSETNSKSIVVPTKVSPEPERQEVTRRDVRISGVNLESLSAVQGSQPTGQLASKSVPGFKSHFASTSIGIENELSGLVVVLPKNSAQTFGYVHDSQGNPLFMLTKDMNQGGYSNPVGINDIQGVNNWQTHTIELVTYPSEISDTAAVESRKEAMLWLAKEFTDHINQSNHQSLPHLVSDDGRFTLVISNSKHLIAAGNGTSIDAQGKTIGMTPSGQQATMAISAKEFGTSSSPEVRLLESAPWYQAGLRDEFLANAKNTTLDDPATAQNVYAYLTSVYSKTADLAKEYGIYINDWDPASEGFSPNAQGLTDPKVKNAWSILPRTKPVRMLELLSAEDSRYVRQQIAEKLKGTYSESLAKNVFEYFQYGGEVAGHGINNATTGSVQQPEPAILFEFRSVPSALSDFVPKTASTVKVDVKALDHFDSASRKAIITEVNALVSGSEDFDAWYQEYRASKGQPPVKNPKSSASANHKAEWLMTQHAEQWAKITAPYTDNHETLTSTKLASNDKEELHALGETSNLENNKQQENVASIINTMLNDMLPFYALRTERNLLVQEGDEGFEVRAWPGTEDKSKTIILEDPEDAAQHKAIERFILANFDNFEQMPDELFLVDNKVISHHEGRTHVLAQKVDGAWQYNATVELMSVTELLDAANVTGKIRGESYQQVIDALTDYHASITEHADYEPESVEKLLNLRKKIEGYVLGHPDSGRVEAMNSLLNQVNTRLDEVSLLSVAEQTIQAQNSFSRLYDQLEAANLKESKHLYLDQNGDFVTKGKGNLANIDLLGSREAVLEKVKLTVSNEYGQTVADTIFAGLSAKDLAKDGKGVDIAGLNKVHQAIEQHLSPVSATLYIWKPSDHSALGHAALQIGQGRTQLEGQAAADFNQQNYVSWWPLGSKSSNISNILNVATKDQPDLKLRWSDFSQPAHQNDTLEHDVASEENDGFGLHDGDIKLKRFIEKLNAAKGIDASFKEASEGYASVLLGNPDMLETTSIPAHVFQPFVEQWNDTSYDMMDVAHRFAQELRLQAQRSDDPELLEKRIGNVIRQFAERALEEIETFKASQADQGRVFRINLEGLDVAAMQAEWHRLSNDPDARYQLLTKNCSSTVAKVLKAGGADKLIGHTWLPKFGVWTPTELFNFGQALQEAQLEIAAKKQSHQVTDVLDALSGNEKPKENVAIENDGTPPRDKESLSPLTRFLNNELYGDKEARRKIGEITQTLLDHAVEKGESQKITLQGEAGRLTGYYHQGTAPSEGETSSPSGKVVLFLHGSGSSAEEQASAIRNHYQKQGIDMLAVNLRGYGESDGGPSEKGLYQDARTMFNYLVNDKGIDPSNIIIHGYSMGGPIAADLARYAAQNGQAVSGLLLDRPMPSMTKAITAHEVANPAGIVGAIAKAVNGQFSVEKNLEGLPKETSILLLTDNEGLGNEGEKLRTKLTASGYNVTGEQTFYGHEASNRLMSQYADQIVSGLSSSASVDEDLDQQGLDTTSTKDQGISNKNDHLQVVDSKEALADGKILHNQNVNSWGPITVTPTTDGGETRFDGQIIVQMENDPVVAKAAANLAGKHAESSVVVQLDSDGNYRVVYGDPSKLDGKLRWQLVGHGRDHSETNNTRLSGYSADELAVKLAKFQQSFNQAENINNKPDHISIVGCSLVSDDKQKGFGHQFINAMDANGLRVDVSVRSSELAVDEAGRKHTKDANGDWVQKAENNKVSLSWDAQGEVVAKDERIRNGIAEGDIDLSRIGVNNVDEPARGAIGDNNDVFDAPEKRKPETEVIANSSSSNQFSYSGNIQVNVGEGEFTAVNWGTSNVGIKVGTGGFKSLAFGDNNVMVHIGDGESKHSVDIGGYQALEGAQMFLGNRNVSFNFGHSNDLILMMDKSIPTPPLVNPFDGAARISGVLQGIATSGEGEDWLAAQEQQWTLSGAKKFVKDMSGLDQSSSVDYTTLVELDSQNERDSRGLKHDAEATLNKQYNQWLSGNGNSGTSQLSRADKLRQANEKLAFNFAVGGQGADIQVTTGNWNFMFGDNIQSILDTNLGSLFGLMTQQFTATGQAKTTFTYTPQDLPRQLKNKLLGQLAGVGAETTLADIFGVDYTASGQIVSRNGQAVDGVAILKEMLEVIGEFSGDQLQAFVDPAKLLDSLKAGIDMGADGIKSFAETHGLKEKAPEEEKDNSSVSVNGANVNSAQGATVADGNTETAETQDRAFGFNSLNLPNLFATIFSQDKQKEMKSLVENLKQNLTADLLNMKEKTFDFLRNSGHLQGDGDINISLGNYNFNWGGDGKDLGAYLGDNNNFWGGRGDDVFYATGKSNIFTGGEGNDMGVLMGRENMMFGGDGNDTAVVAGRINHVFLGAGDDQSFVFGEGGEIDTGSGRDYVVTSGNFNRVDTGDDQDYSVTIGNNNQVELGAGNDFANIFGNYNRINAGAGNDVVKLMGYHAVLNGGDGDDHLIATAISKFSQFNGGEGRDLMVLGGYQNTFKGGTDVDSFVVSGDVIDNLVEDIRSEDNIVFNGIDWQKLWFERSGYDLKLSILRDPSNDSDQSKFEHIGSVTFSDYFNGNRAQVVIGMSEKDLSGEREYTMLSDSAIDALVQAMSGFEPQAGDNGFIDSLESKSQAAISMAWSDVVHKKGLMV</sequence>
<keyword id="KW-0002">3D-structure</keyword>
<keyword id="KW-0012">Acyltransferase</keyword>
<keyword id="KW-0067">ATP-binding</keyword>
<keyword id="KW-0068">Autocatalytic cleavage</keyword>
<keyword id="KW-0903">Direct protein sequencing</keyword>
<keyword id="KW-1032">Host cell membrane</keyword>
<keyword id="KW-1035">Host cytoplasm</keyword>
<keyword id="KW-1043">Host membrane</keyword>
<keyword id="KW-0378">Hydrolase</keyword>
<keyword id="KW-0436">Ligase</keyword>
<keyword id="KW-0446">Lipid-binding</keyword>
<keyword id="KW-0460">Magnesium</keyword>
<keyword id="KW-0472">Membrane</keyword>
<keyword id="KW-0479">Metal-binding</keyword>
<keyword id="KW-0511">Multifunctional enzyme</keyword>
<keyword id="KW-0547">Nucleotide-binding</keyword>
<keyword id="KW-0645">Protease</keyword>
<keyword id="KW-1185">Reference proteome</keyword>
<keyword id="KW-0677">Repeat</keyword>
<keyword id="KW-0964">Secreted</keyword>
<keyword id="KW-0732">Signal</keyword>
<keyword id="KW-0788">Thiol protease</keyword>
<keyword id="KW-0800">Toxin</keyword>
<keyword id="KW-0808">Transferase</keyword>
<keyword id="KW-0843">Virulence</keyword>
<gene>
    <name evidence="32" type="primary">rtxA</name>
    <name evidence="35" type="synonym">rtx</name>
    <name evidence="39" type="ordered locus">VC_1451</name>
</gene>
<feature type="signal peptide" evidence="2">
    <location>
        <begin position="1"/>
        <end position="32"/>
    </location>
</feature>
<feature type="chain" id="PRO_0000434113" description="Multifunctional-autoprocessing repeats-in-toxin">
    <location>
        <begin position="33"/>
        <end position="4558"/>
    </location>
</feature>
<feature type="chain" id="PRO_0000434114" description="Actin cross-linking toxin F1" evidence="38">
    <location>
        <begin position="33"/>
        <end position="2447"/>
    </location>
</feature>
<feature type="chain" id="PRO_0000434115" description="Actin cross-linking toxin F4" evidence="38">
    <location>
        <begin position="1972"/>
        <end position="2447"/>
    </location>
</feature>
<feature type="chain" id="PRO_0000434116" description="N-epsilon-fatty acyltransferase F2" evidence="38">
    <location>
        <begin position="2448"/>
        <end position="3098"/>
    </location>
</feature>
<feature type="chain" id="PRO_0000434117" description="ABH effector region toxin F5" evidence="38">
    <location>
        <begin position="3099"/>
        <end position="3441"/>
    </location>
</feature>
<feature type="chain" id="PRO_0000434118" description="Cysteine protease domain-containing toxin F3" evidence="38">
    <location>
        <begin position="3442"/>
        <end position="4558"/>
    </location>
</feature>
<feature type="repeat" description="RtxA 1" evidence="2">
    <location>
        <begin position="114"/>
        <end position="131"/>
    </location>
</feature>
<feature type="repeat" description="RtxA 2" evidence="2">
    <location>
        <begin position="134"/>
        <end position="151"/>
    </location>
</feature>
<feature type="repeat" description="RtxA 3" evidence="2">
    <location>
        <begin position="154"/>
        <end position="170"/>
    </location>
</feature>
<feature type="repeat" description="RtxA 4" evidence="2">
    <location>
        <begin position="174"/>
        <end position="197"/>
    </location>
</feature>
<feature type="repeat" description="RtxA 5" evidence="2">
    <location>
        <begin position="200"/>
        <end position="217"/>
    </location>
</feature>
<feature type="repeat" description="RtxA 6" evidence="2">
    <location>
        <begin position="220"/>
        <end position="237"/>
    </location>
</feature>
<feature type="repeat" description="RtxA 7" evidence="2">
    <location>
        <begin position="268"/>
        <end position="285"/>
    </location>
</feature>
<feature type="repeat" description="RtxA 8" evidence="2">
    <location>
        <begin position="288"/>
        <end position="304"/>
    </location>
</feature>
<feature type="repeat" description="RtxA 9" evidence="2">
    <location>
        <begin position="594"/>
        <end position="611"/>
    </location>
</feature>
<feature type="repeat" description="RtxA 10" evidence="2">
    <location>
        <begin position="614"/>
        <end position="630"/>
    </location>
</feature>
<feature type="repeat" description="RtxA 11" evidence="2">
    <location>
        <begin position="634"/>
        <end position="651"/>
    </location>
</feature>
<feature type="repeat" description="RtxA 12" evidence="2">
    <location>
        <begin position="654"/>
        <end position="668"/>
    </location>
</feature>
<feature type="repeat" description="RtxA 13" evidence="2">
    <location>
        <begin position="751"/>
        <end position="763"/>
    </location>
</feature>
<feature type="repeat" description="RtxA 14" evidence="2">
    <location>
        <begin position="769"/>
        <end position="781"/>
    </location>
</feature>
<feature type="repeat" description="RtxA 15" evidence="2">
    <location>
        <begin position="792"/>
        <end position="808"/>
    </location>
</feature>
<feature type="repeat" description="RtxA 16" evidence="2">
    <location>
        <begin position="811"/>
        <end position="826"/>
    </location>
</feature>
<feature type="repeat" description="RtxA 17" evidence="2">
    <location>
        <begin position="830"/>
        <end position="845"/>
    </location>
</feature>
<feature type="repeat" description="RtxA 18" evidence="2">
    <location>
        <begin position="851"/>
        <end position="865"/>
    </location>
</feature>
<feature type="repeat" description="RtxA 19" evidence="2">
    <location>
        <begin position="868"/>
        <end position="885"/>
    </location>
</feature>
<feature type="repeat" description="RtxA 20" evidence="2">
    <location>
        <begin position="887"/>
        <end position="901"/>
    </location>
</feature>
<feature type="repeat" description="RtxA 21" evidence="2">
    <location>
        <begin position="906"/>
        <end position="920"/>
    </location>
</feature>
<feature type="repeat" description="RtxA 22" evidence="2">
    <location>
        <begin position="925"/>
        <end position="942"/>
    </location>
</feature>
<feature type="repeat" description="RtxA 23" evidence="2">
    <location>
        <begin position="944"/>
        <end position="960"/>
    </location>
</feature>
<feature type="repeat" description="RtxA 24" evidence="2">
    <location>
        <begin position="982"/>
        <end position="994"/>
    </location>
</feature>
<feature type="repeat" description="RtxA 25" evidence="2">
    <location>
        <begin position="1001"/>
        <end position="1016"/>
    </location>
</feature>
<feature type="repeat" description="RtxA 26" evidence="2">
    <location>
        <begin position="1041"/>
        <end position="1053"/>
    </location>
</feature>
<feature type="repeat" description="RtxA 27" evidence="2">
    <location>
        <begin position="1077"/>
        <end position="1089"/>
    </location>
</feature>
<feature type="repeat" description="RtxA 28" evidence="2">
    <location>
        <begin position="1097"/>
        <end position="1112"/>
    </location>
</feature>
<feature type="repeat" description="RtxA 29" evidence="2">
    <location>
        <begin position="1120"/>
        <end position="1132"/>
    </location>
</feature>
<feature type="repeat" description="RtxA 30" evidence="2">
    <location>
        <begin position="1135"/>
        <end position="1152"/>
    </location>
</feature>
<feature type="repeat" description="RtxA 31" evidence="2">
    <location>
        <begin position="1155"/>
        <end position="1169"/>
    </location>
</feature>
<feature type="repeat" description="RtxA 32" evidence="2">
    <location>
        <begin position="1173"/>
        <end position="1189"/>
    </location>
</feature>
<feature type="repeat" description="RtxA 33" evidence="2">
    <location>
        <begin position="1194"/>
        <end position="1209"/>
    </location>
</feature>
<feature type="repeat" description="RtxA 34" evidence="2">
    <location>
        <begin position="1211"/>
        <end position="1227"/>
    </location>
</feature>
<feature type="repeat" description="RtxA 35" evidence="2">
    <location>
        <begin position="1230"/>
        <end position="1246"/>
    </location>
</feature>
<feature type="repeat" description="RtxA 36" evidence="2">
    <location>
        <begin position="1252"/>
        <end position="1266"/>
    </location>
</feature>
<feature type="repeat" description="RtxA 37" evidence="2">
    <location>
        <begin position="1268"/>
        <end position="1285"/>
    </location>
</feature>
<feature type="repeat" description="RtxA 38" evidence="2">
    <location>
        <begin position="1306"/>
        <end position="1323"/>
    </location>
</feature>
<feature type="repeat" description="RtxA 39" evidence="2">
    <location>
        <begin position="1325"/>
        <end position="1342"/>
    </location>
</feature>
<feature type="domain" description="ACD" evidence="4 37">
    <location>
        <begin position="1988"/>
        <end position="2422"/>
    </location>
</feature>
<feature type="domain" description="Peptidase C80" evidence="3">
    <location>
        <begin position="3462"/>
        <end position="3646"/>
    </location>
</feature>
<feature type="region of interest" description="Disordered" evidence="5">
    <location>
        <begin position="1623"/>
        <end position="1688"/>
    </location>
</feature>
<feature type="region of interest" description="Disordered" evidence="5">
    <location>
        <begin position="1752"/>
        <end position="1779"/>
    </location>
</feature>
<feature type="region of interest" description="Disordered" evidence="5">
    <location>
        <begin position="1791"/>
        <end position="1890"/>
    </location>
</feature>
<feature type="region of interest" description="Membrane localization region (MLD)" evidence="25">
    <location>
        <begin position="2574"/>
        <end position="2658"/>
    </location>
</feature>
<feature type="region of interest" description="Rho inactivation domain (RID)" evidence="36">
    <location>
        <begin position="2734"/>
        <end position="3098"/>
    </location>
</feature>
<feature type="region of interest" description="ABH effector region" evidence="36">
    <location>
        <begin position="3195"/>
        <end position="3310"/>
    </location>
</feature>
<feature type="region of interest" description="Disordered" evidence="5">
    <location>
        <begin position="3404"/>
        <end position="3426"/>
    </location>
</feature>
<feature type="compositionally biased region" description="Polar residues" evidence="5">
    <location>
        <begin position="1625"/>
        <end position="1634"/>
    </location>
</feature>
<feature type="compositionally biased region" description="Basic and acidic residues" evidence="5">
    <location>
        <begin position="1635"/>
        <end position="1654"/>
    </location>
</feature>
<feature type="compositionally biased region" description="Polar residues" evidence="5">
    <location>
        <begin position="1660"/>
        <end position="1679"/>
    </location>
</feature>
<feature type="compositionally biased region" description="Basic and acidic residues" evidence="5">
    <location>
        <begin position="1791"/>
        <end position="1815"/>
    </location>
</feature>
<feature type="compositionally biased region" description="Polar residues" evidence="5">
    <location>
        <begin position="1879"/>
        <end position="1888"/>
    </location>
</feature>
<feature type="compositionally biased region" description="Polar residues" evidence="5">
    <location>
        <begin position="3414"/>
        <end position="3426"/>
    </location>
</feature>
<feature type="active site" description="For cysteine protease activity" evidence="3 14">
    <location>
        <position position="3532"/>
    </location>
</feature>
<feature type="active site" description="Nucleophile; for cysteine protease activity" evidence="3 14">
    <location>
        <position position="3581"/>
    </location>
</feature>
<feature type="binding site" evidence="1">
    <location>
        <begin position="1999"/>
        <end position="2003"/>
    </location>
    <ligand>
        <name>ATP</name>
        <dbReference type="ChEBI" id="CHEBI:30616"/>
    </ligand>
</feature>
<feature type="binding site" evidence="1">
    <location>
        <position position="2003"/>
    </location>
    <ligand>
        <name>Mg(2+)</name>
        <dbReference type="ChEBI" id="CHEBI:18420"/>
        <label>1</label>
        <note>catalytic; for actin cross-linking activity</note>
    </ligand>
</feature>
<feature type="binding site" evidence="1">
    <location>
        <position position="2003"/>
    </location>
    <ligand>
        <name>Mg(2+)</name>
        <dbReference type="ChEBI" id="CHEBI:18420"/>
        <label>2</label>
        <note>catalytic; for actin cross-linking activity</note>
    </ligand>
</feature>
<feature type="binding site" evidence="1">
    <location>
        <position position="2065"/>
    </location>
    <ligand>
        <name>Mg(2+)</name>
        <dbReference type="ChEBI" id="CHEBI:18420"/>
        <label>2</label>
        <note>catalytic; for actin cross-linking activity</note>
    </ligand>
</feature>
<feature type="binding site" evidence="1">
    <location>
        <position position="2149"/>
    </location>
    <ligand>
        <name>Mg(2+)</name>
        <dbReference type="ChEBI" id="CHEBI:18420"/>
        <label>1</label>
        <note>catalytic; for actin cross-linking activity</note>
    </ligand>
</feature>
<feature type="binding site" evidence="1">
    <location>
        <position position="2255"/>
    </location>
    <ligand>
        <name>ATP</name>
        <dbReference type="ChEBI" id="CHEBI:30616"/>
    </ligand>
</feature>
<feature type="binding site" evidence="1">
    <location>
        <position position="2326"/>
    </location>
    <ligand>
        <name>Mg(2+)</name>
        <dbReference type="ChEBI" id="CHEBI:18420"/>
        <label>1</label>
        <note>catalytic; for actin cross-linking activity</note>
    </ligand>
</feature>
<feature type="binding site" evidence="18 21 22 41 42 43">
    <location>
        <begin position="3468"/>
        <end position="3470"/>
    </location>
    <ligand>
        <name>1D-myo-inositol hexakisphosphate</name>
        <dbReference type="ChEBI" id="CHEBI:58130"/>
    </ligand>
</feature>
<feature type="binding site" evidence="18 21 22 41 42 43">
    <location>
        <begin position="3495"/>
        <end position="3496"/>
    </location>
    <ligand>
        <name>1D-myo-inositol hexakisphosphate</name>
        <dbReference type="ChEBI" id="CHEBI:58130"/>
    </ligand>
</feature>
<feature type="binding site" evidence="18 21 22 41 42 43">
    <location>
        <position position="3526"/>
    </location>
    <ligand>
        <name>1D-myo-inositol hexakisphosphate</name>
        <dbReference type="ChEBI" id="CHEBI:58130"/>
    </ligand>
</feature>
<feature type="binding site" evidence="18 21 22 41 42 43">
    <location>
        <position position="3577"/>
    </location>
    <ligand>
        <name>1D-myo-inositol hexakisphosphate</name>
        <dbReference type="ChEBI" id="CHEBI:58130"/>
    </ligand>
</feature>
<feature type="binding site" evidence="18 21 22 41 42 43">
    <location>
        <begin position="3610"/>
        <end position="3612"/>
    </location>
    <ligand>
        <name>1D-myo-inositol hexakisphosphate</name>
        <dbReference type="ChEBI" id="CHEBI:58130"/>
    </ligand>
</feature>
<feature type="binding site" evidence="18 21 22 41 42 43">
    <location>
        <begin position="3623"/>
        <end position="3624"/>
    </location>
    <ligand>
        <name>1D-myo-inositol hexakisphosphate</name>
        <dbReference type="ChEBI" id="CHEBI:58130"/>
    </ligand>
</feature>
<feature type="binding site" evidence="18 21 22 41 42 43">
    <location>
        <position position="3636"/>
    </location>
    <ligand>
        <name>1D-myo-inositol hexakisphosphate</name>
        <dbReference type="ChEBI" id="CHEBI:58130"/>
    </ligand>
</feature>
<feature type="binding site" evidence="18 21 22 41 42 43">
    <location>
        <position position="3641"/>
    </location>
    <ligand>
        <name>1D-myo-inositol hexakisphosphate</name>
        <dbReference type="ChEBI" id="CHEBI:58130"/>
    </ligand>
</feature>
<feature type="site" description="Cleavage; by autolysis" evidence="22">
    <location>
        <begin position="1971"/>
        <end position="1972"/>
    </location>
</feature>
<feature type="site" description="Cleavage; by autolysis" evidence="21 22">
    <location>
        <begin position="2447"/>
        <end position="2448"/>
    </location>
</feature>
<feature type="site" description="Cleavage; by autolysis" evidence="21 22">
    <location>
        <begin position="3098"/>
        <end position="3099"/>
    </location>
</feature>
<feature type="site" description="Cleavage; by autolysis" evidence="12 17 21 22">
    <location>
        <begin position="3441"/>
        <end position="3442"/>
    </location>
</feature>
<feature type="mutagenesis site" description="Abolished actin cross-linking activity and ability to round host cells." evidence="23">
    <original>E</original>
    <variation>A</variation>
    <location>
        <position position="2003"/>
    </location>
</feature>
<feature type="mutagenesis site" description="Impaired actin cross-linking activity and ability to round host cells." evidence="23">
    <original>E</original>
    <variation>A</variation>
    <location>
        <position position="2005"/>
    </location>
</feature>
<feature type="mutagenesis site" description="Reduced actin cross-linking activity." evidence="23">
    <original>E</original>
    <variation>G</variation>
    <location>
        <position position="2005"/>
    </location>
</feature>
<feature type="mutagenesis site" description="Reduced actin cross-linking activity." evidence="23">
    <original>L</original>
    <variation>P</variation>
    <location>
        <position position="2035"/>
    </location>
</feature>
<feature type="mutagenesis site" description="Impaired actin cross-linking activity and ability to round host cells." evidence="23">
    <original>D</original>
    <variation>A</variation>
    <location>
        <position position="2038"/>
    </location>
</feature>
<feature type="mutagenesis site" description="Reduced actin cross-linking activity." evidence="23">
    <original>G</original>
    <variation>E</variation>
    <location>
        <position position="2055"/>
    </location>
</feature>
<feature type="mutagenesis site" description="Abolished actin cross-linking activity." evidence="23">
    <original>E</original>
    <variation>A</variation>
    <location>
        <position position="2065"/>
    </location>
</feature>
<feature type="mutagenesis site" description="Reduced actin cross-linking activity." evidence="23">
    <original>E</original>
    <variation>G</variation>
    <location>
        <position position="2065"/>
    </location>
</feature>
<feature type="mutagenesis site" description="Reduced actin cross-linking activity." evidence="23">
    <original>T</original>
    <variation>P</variation>
    <location>
        <position position="2068"/>
    </location>
</feature>
<feature type="mutagenesis site" description="Reduced actin cross-linking activity." evidence="23">
    <original>L</original>
    <variation>P</variation>
    <location>
        <position position="2089"/>
    </location>
</feature>
<feature type="mutagenesis site" description="Abolished actin cross-linking activity." evidence="23">
    <original>H</original>
    <variation>A</variation>
    <location>
        <position position="2096"/>
    </location>
</feature>
<feature type="mutagenesis site" description="Reduced actin cross-linking activity." evidence="23">
    <original>L</original>
    <variation>P</variation>
    <location>
        <position position="2117"/>
    </location>
</feature>
<feature type="mutagenesis site" description="Reduced actin cross-linking activity." evidence="23">
    <original>Q</original>
    <variation>R</variation>
    <location>
        <position position="2149"/>
    </location>
</feature>
<feature type="mutagenesis site" description="Reduced actin cross-linking activity." evidence="23">
    <original>A</original>
    <variation>T</variation>
    <location>
        <position position="2153"/>
    </location>
</feature>
<feature type="mutagenesis site" description="Reduced actin cross-linking activity." evidence="23">
    <original>W</original>
    <variation>R</variation>
    <location>
        <position position="2175"/>
    </location>
</feature>
<feature type="mutagenesis site" description="Reduced actin cross-linking activity." evidence="23">
    <original>L</original>
    <variation>P</variation>
    <location>
        <position position="2206"/>
    </location>
</feature>
<feature type="mutagenesis site" description="Reduced actin cross-linking activity." evidence="23">
    <original>V</original>
    <variation>A</variation>
    <location>
        <position position="2209"/>
    </location>
</feature>
<feature type="mutagenesis site" description="Reduced actin cross-linking activity." evidence="23">
    <original>W</original>
    <variation>R</variation>
    <location>
        <position position="2250"/>
    </location>
</feature>
<feature type="mutagenesis site" description="Reduced actin cross-linking activity." evidence="23">
    <original>V</original>
    <variation>I</variation>
    <location>
        <position position="2259"/>
    </location>
</feature>
<feature type="mutagenesis site" description="Abolished actin cross-linking activity." evidence="23">
    <original>E</original>
    <variation>A</variation>
    <location>
        <position position="2326"/>
    </location>
</feature>
<feature type="mutagenesis site" description="Impaired actin cross-linking activity and ability to round host cells." evidence="23">
    <original>R</original>
    <variation>A</variation>
    <location>
        <position position="2328"/>
    </location>
</feature>
<feature type="mutagenesis site" description="Reduced actin cross-linking activity." evidence="23">
    <original>R</original>
    <variation>H</variation>
    <location>
        <position position="2328"/>
    </location>
</feature>
<feature type="mutagenesis site" description="Impaired cleavage of the Rho inactivation domain-containing toxin F2 chain; when associated with A-3098." evidence="21">
    <original>L</original>
    <variation>A</variation>
    <location>
        <position position="2447"/>
    </location>
</feature>
<feature type="mutagenesis site" description="Abolished localization to the host cell membrane." evidence="25">
    <original>Y</original>
    <variation>F</variation>
    <location>
        <position position="2596"/>
    </location>
</feature>
<feature type="mutagenesis site" description="Abolished localization to the host cell membrane." evidence="25">
    <original>S</original>
    <variation>T</variation>
    <location>
        <position position="2641"/>
    </location>
</feature>
<feature type="mutagenesis site" description="Abolished localization to the host cell membrane." evidence="25">
    <original>R</original>
    <variation>K</variation>
    <location>
        <position position="2643"/>
    </location>
</feature>
<feature type="mutagenesis site" description="Does not affect the activity of the Rho inactivation domain-containing toxin F2 chain." evidence="28">
    <original>E</original>
    <variation>A</variation>
    <location>
        <position position="2734"/>
    </location>
</feature>
<feature type="mutagenesis site" description="Does not affect the activity of the Rho inactivation domain-containing toxin F2 chain." evidence="28">
    <original>Y</original>
    <variation>A</variation>
    <location>
        <position position="2735"/>
    </location>
</feature>
<feature type="mutagenesis site" description="Does not affect the activity of the Rho inactivation domain-containing toxin F2 chain." evidence="28">
    <original>D</original>
    <variation>A</variation>
    <location>
        <position position="2760"/>
    </location>
</feature>
<feature type="mutagenesis site" description="Does not affect the activity of the Rho inactivation domain-containing toxin F2 chain." evidence="28">
    <original>L</original>
    <variation>A</variation>
    <location>
        <position position="2764"/>
    </location>
</feature>
<feature type="mutagenesis site" description="Does not affect the activity of the Rho inactivation domain-containing toxin F2 chain." evidence="28">
    <original>K</original>
    <variation>A</variation>
    <location>
        <position position="2766"/>
    </location>
</feature>
<feature type="mutagenesis site" description="Does not affect the activity of the Rho inactivation domain-containing toxin F2 chain." evidence="28">
    <original>H</original>
    <variation>A</variation>
    <location>
        <position position="2768"/>
    </location>
</feature>
<feature type="mutagenesis site" description="Does not affect the activity of the Rho inactivation domain-containing toxin F2 chain." evidence="28">
    <original>E</original>
    <variation>A</variation>
    <location>
        <position position="2772"/>
    </location>
</feature>
<feature type="mutagenesis site" description="Does not affect the activity of the Rho inactivation domain-containing toxin F2 chain." evidence="28">
    <original>S</original>
    <variation>A</variation>
    <location>
        <position position="2776"/>
    </location>
</feature>
<feature type="mutagenesis site" description="Does not affect the activity of the Rho inactivation domain-containing toxin F2 chain." evidence="28">
    <original>S</original>
    <variation>A</variation>
    <location>
        <position position="2779"/>
    </location>
</feature>
<feature type="mutagenesis site" description="Does not affect the activity of the Rho inactivation domain-containing toxin F2 chain." evidence="28">
    <original>T</original>
    <variation>A</variation>
    <location>
        <position position="2781"/>
    </location>
</feature>
<feature type="mutagenesis site" description="Does not affect the activity of the Rho inactivation domain-containing toxin F2 chain." evidence="28">
    <original>K</original>
    <variation>A</variation>
    <location>
        <position position="2786"/>
    </location>
</feature>
<feature type="mutagenesis site" description="Does not affect the activity of the Rho inactivation domain-containing toxin F2 chain." evidence="28">
    <original>S</original>
    <variation>A</variation>
    <location>
        <position position="2788"/>
    </location>
</feature>
<feature type="mutagenesis site" description="Does not affect the activity of the Rho inactivation domain-containing toxin F2 chain." evidence="28">
    <original>H</original>
    <variation>A</variation>
    <location>
        <position position="2790"/>
    </location>
</feature>
<feature type="mutagenesis site" description="Does not affect the activity of the Rho inactivation domain-containing toxin F2 chain." evidence="28">
    <original>S</original>
    <variation>A</variation>
    <location>
        <position position="2791"/>
    </location>
</feature>
<feature type="mutagenesis site" description="Does not affect the activity of the Rho inactivation domain-containing toxin F2 chain." evidence="28">
    <original>L</original>
    <variation>A</variation>
    <location>
        <position position="2793"/>
    </location>
</feature>
<feature type="mutagenesis site" description="Abolished lysine-palmitoyltransferase activity and ability to inactivate host Rho GTPases." evidence="28 31">
    <original>H</original>
    <variation>A</variation>
    <location>
        <position position="2795"/>
    </location>
</feature>
<feature type="mutagenesis site" description="Does not affect the activity of the Rho inactivation domain-containing toxin F2 chain." evidence="28">
    <original>L</original>
    <variation>A</variation>
    <location>
        <position position="2798"/>
    </location>
</feature>
<feature type="mutagenesis site" description="Does not affect the activity of the Rho inactivation domain-containing toxin F2 chain." evidence="28">
    <original>R</original>
    <variation>A</variation>
    <location>
        <position position="2804"/>
    </location>
</feature>
<feature type="mutagenesis site" description="Impaired activity of the Rho inactivation domain-containing toxin F2 chain." evidence="28">
    <original>Y</original>
    <variation>A</variation>
    <location>
        <position position="2820"/>
    </location>
</feature>
<feature type="mutagenesis site" description="Does not affect the activity of the Rho inactivation domain-containing toxin F2 chain." evidence="28">
    <original>Y</original>
    <variation>F</variation>
    <location>
        <position position="2820"/>
    </location>
</feature>
<feature type="mutagenesis site" description="Does not affect the activity of the Rho inactivation domain-containing toxin F2 chain." evidence="28">
    <original>S</original>
    <variation>A</variation>
    <location>
        <position position="2822"/>
    </location>
</feature>
<feature type="mutagenesis site" description="Does not affect the activity of the Rho inactivation domain-containing toxin F2 chain." evidence="28">
    <original>K</original>
    <variation>A</variation>
    <location>
        <position position="2829"/>
    </location>
</feature>
<feature type="mutagenesis site" description="Does not affect the activity of the Rho inactivation domain-containing toxin F2 chain." evidence="28">
    <original>S</original>
    <variation>A</variation>
    <location>
        <position position="2830"/>
    </location>
</feature>
<feature type="mutagenesis site" description="Does not affect the activity of the Rho inactivation domain-containing toxin F2 chain." evidence="28">
    <original>R</original>
    <variation>A</variation>
    <location>
        <position position="2850"/>
    </location>
</feature>
<feature type="mutagenesis site" description="Impaired activity of the Rho inactivation domain-containing toxin F2 chain." evidence="28">
    <original>L</original>
    <variation>A</variation>
    <location>
        <position position="2864"/>
    </location>
</feature>
<feature type="mutagenesis site" description="Impaired activity of the Rho inactivation domain-containing toxin F2 chain." evidence="28">
    <original>D</original>
    <variation>A</variation>
    <location>
        <position position="2867"/>
    </location>
</feature>
<feature type="mutagenesis site" description="Does not affect the activity of the Rho inactivation domain-containing toxin F2 chain." evidence="28">
    <original>E</original>
    <variation>A</variation>
    <location>
        <position position="2871"/>
    </location>
</feature>
<feature type="mutagenesis site" description="Does not affect the activity of the Rho inactivation domain-containing toxin F2 chain." evidence="28">
    <original>E</original>
    <variation>A</variation>
    <location>
        <position position="2872"/>
    </location>
</feature>
<feature type="mutagenesis site" description="Does not affect the activity of the Rho inactivation domain-containing toxin F2 chain." evidence="28">
    <original>D</original>
    <variation>A</variation>
    <location>
        <position position="2874"/>
    </location>
</feature>
<feature type="mutagenesis site" description="Does not affect the activity of the Rho inactivation domain-containing toxin F2 chain." evidence="28">
    <original>R</original>
    <variation>A</variation>
    <location>
        <position position="2887"/>
    </location>
</feature>
<feature type="mutagenesis site" description="Does not affect the activity of the Rho inactivation domain-containing toxin F2 chain." evidence="28">
    <original>L</original>
    <variation>A</variation>
    <location>
        <position position="2914"/>
    </location>
</feature>
<feature type="mutagenesis site" description="Does not affect the activity of the Rho inactivation domain-containing toxin F2 chain." evidence="28">
    <original>R</original>
    <variation>A</variation>
    <location>
        <position position="2950"/>
    </location>
</feature>
<feature type="mutagenesis site" description="Does not affect the activity of the Rho inactivation domain-containing toxin F2 chain." evidence="28">
    <original>R</original>
    <variation>A</variation>
    <location>
        <position position="2956"/>
    </location>
</feature>
<feature type="mutagenesis site" description="Does not affect the activity of the Rho inactivation domain-containing toxin F2 chain." evidence="28">
    <original>R</original>
    <variation>A</variation>
    <location>
        <position position="2961"/>
    </location>
</feature>
<feature type="mutagenesis site" description="Does not affect the activity of the Rho inactivation domain-containing toxin F2 chain." evidence="28">
    <original>R</original>
    <variation>A</variation>
    <location>
        <position position="2971"/>
    </location>
</feature>
<feature type="mutagenesis site" description="Does not affect the activity of the Rho inactivation domain-containing toxin F2 chain." evidence="28">
    <original>R</original>
    <variation>A</variation>
    <location>
        <position position="2977"/>
    </location>
</feature>
<feature type="mutagenesis site" description="Does not affect the activity of the Rho inactivation domain-containing toxin F2 chain." evidence="28">
    <original>E</original>
    <variation>A</variation>
    <location>
        <position position="2981"/>
    </location>
</feature>
<feature type="mutagenesis site" description="Does not affect the activity of the Rho inactivation domain-containing toxin F2 chain." evidence="28">
    <original>R</original>
    <variation>A</variation>
    <location>
        <position position="2982"/>
    </location>
</feature>
<feature type="mutagenesis site" description="Does not affect the activity of the Rho inactivation domain-containing toxin F2 chain." evidence="28">
    <original>K</original>
    <variation>A</variation>
    <location>
        <position position="2991"/>
    </location>
</feature>
<feature type="mutagenesis site" description="Does not affect the activity of the Rho inactivation domain-containing toxin F2 chain." evidence="28">
    <original>S</original>
    <variation>A</variation>
    <location>
        <position position="2993"/>
    </location>
</feature>
<feature type="mutagenesis site" description="Does not affect the activity of the Rho inactivation domain-containing toxin F2 chain." evidence="28">
    <original>D</original>
    <variation>A</variation>
    <location>
        <position position="2996"/>
    </location>
</feature>
<feature type="mutagenesis site" description="Does not affect the activity of the Rho inactivation domain-containing toxin F2 chain." evidence="28">
    <original>R</original>
    <variation>A</variation>
    <location>
        <position position="2999"/>
    </location>
</feature>
<feature type="mutagenesis site" description="Does not affect the activity of the Rho inactivation domain-containing toxin F2 chain." evidence="28">
    <original>R</original>
    <variation>A</variation>
    <location>
        <position position="3002"/>
    </location>
</feature>
<feature type="mutagenesis site" description="Does not affect the activity of the Rho inactivation domain-containing toxin F2 chain." evidence="28">
    <original>L</original>
    <variation>A</variation>
    <location>
        <position position="3005"/>
    </location>
</feature>
<feature type="mutagenesis site" description="Does not affect the activity of the Rho inactivation domain-containing toxin F2 chain." evidence="28">
    <original>L</original>
    <variation>A</variation>
    <location>
        <position position="3008"/>
    </location>
</feature>
<feature type="mutagenesis site" description="Does not affect the activity of the Rho inactivation domain-containing toxin F2 chain." evidence="28">
    <original>E</original>
    <variation>A</variation>
    <location>
        <position position="3016"/>
    </location>
</feature>
<feature type="mutagenesis site" description="Does not affect the activity of the Rho inactivation domain-containing toxin F2 chain." evidence="28">
    <original>R</original>
    <variation>A</variation>
    <location>
        <position position="3019"/>
    </location>
</feature>
<feature type="mutagenesis site" description="Does not affect the activity of the Rho inactivation domain-containing toxin F2 chain." evidence="28">
    <original>R</original>
    <variation>A</variation>
    <location>
        <position position="3027"/>
    </location>
</feature>
<feature type="mutagenesis site" description="Impaired activity of the Rho inactivation domain-containing toxin F2 chain." evidence="28">
    <original>Y</original>
    <variation>A</variation>
    <location>
        <position position="3028"/>
    </location>
</feature>
<feature type="mutagenesis site" description="Does not affect the activity of the Rho inactivation domain-containing toxin F2 chain." evidence="28">
    <original>Y</original>
    <variation>F</variation>
    <location>
        <position position="3028"/>
    </location>
</feature>
<feature type="mutagenesis site" description="Does not affect the activity of the Rho inactivation domain-containing toxin F2 chain." evidence="28">
    <original>L</original>
    <variation>A</variation>
    <location>
        <position position="3031"/>
    </location>
</feature>
<feature type="mutagenesis site" description="Abolished lysine-palmitoyltransferase activity and ability to inactivate host Rho GTPases." evidence="28">
    <original>C</original>
    <variation>A</variation>
    <variation>S</variation>
    <location>
        <position position="3035"/>
    </location>
</feature>
<feature type="mutagenesis site" description="Does not affect the activity of the Rho inactivation domain-containing toxin F2 chain." evidence="28">
    <original>S</original>
    <variation>A</variation>
    <location>
        <position position="3036"/>
    </location>
</feature>
<feature type="mutagenesis site" description="Does not affect the activity of the Rho inactivation domain-containing toxin F2 chain." evidence="28">
    <original>S</original>
    <variation>A</variation>
    <location>
        <position position="3037"/>
    </location>
</feature>
<feature type="mutagenesis site" description="Does not affect the activity of the Rho inactivation domain-containing toxin F2 chain." evidence="28">
    <original>L</original>
    <variation>A</variation>
    <location>
        <position position="3043"/>
    </location>
</feature>
<feature type="mutagenesis site" description="Does not affect the activity of the Rho inactivation domain-containing toxin F2 chain." evidence="28">
    <original>K</original>
    <variation>A</variation>
    <location>
        <position position="3044"/>
    </location>
</feature>
<feature type="mutagenesis site" description="Does not affect the activity of the Rho inactivation domain-containing toxin F2 chain." evidence="28">
    <original>D</original>
    <variation>A</variation>
    <location>
        <position position="3049"/>
    </location>
</feature>
<feature type="mutagenesis site" description="Does not affect the activity of the Rho inactivation domain-containing toxin F2 chain." evidence="28">
    <original>H</original>
    <variation>A</variation>
    <location>
        <position position="3054"/>
    </location>
</feature>
<feature type="mutagenesis site" description="Does not affect the activity of the Rho inactivation domain-containing toxin F2 chain." evidence="28">
    <original>T</original>
    <variation>A</variation>
    <location>
        <position position="3064"/>
    </location>
</feature>
<feature type="mutagenesis site" description="Does not affect the activity of the Rho inactivation domain-containing toxin F2 chain." evidence="28">
    <original>E</original>
    <variation>A</variation>
    <location>
        <position position="3077"/>
    </location>
</feature>
<feature type="mutagenesis site" description="Impaired cleavage of the Rho inactivation domain-containing toxin F2 chain; when associated with A-2447." evidence="21">
    <original>L</original>
    <variation>A</variation>
    <location>
        <position position="3098"/>
    </location>
</feature>
<feature type="mutagenesis site" description="Modified autocatalytic cleavage site, leading to cleavage at another site." evidence="21">
    <original>L</original>
    <variation>A</variation>
    <location>
        <position position="3441"/>
    </location>
</feature>
<feature type="mutagenesis site" description="No effect in autocatalytic cleavage." evidence="17">
    <original>P</original>
    <variation>A</variation>
    <location>
        <position position="3462"/>
    </location>
</feature>
<feature type="mutagenesis site" description="Decreased autocatalytic cleavage." evidence="17">
    <original>R</original>
    <variation>A</variation>
    <location>
        <position position="3470"/>
    </location>
</feature>
<feature type="mutagenesis site" description="No effect in autocatalytic cleavage." evidence="17">
    <original>I</original>
    <variation>A</variation>
    <location>
        <position position="3476"/>
    </location>
</feature>
<feature type="mutagenesis site" description="No effect in autocatalytic cleavage." evidence="17">
    <original>Q</original>
    <variation>A</variation>
    <location>
        <position position="3478"/>
    </location>
</feature>
<feature type="mutagenesis site" description="No effect in autocatalytic cleavage. Impaired autocatalytic cleavage; when associated with A-3482." evidence="17">
    <original>E</original>
    <variation>A</variation>
    <location>
        <position position="3480"/>
    </location>
</feature>
<feature type="mutagenesis site" description="No effect in autocatalytic cleavage. Impaired autocatalytic cleavage; when associated with A-3480." evidence="17">
    <original>D</original>
    <variation>A</variation>
    <location>
        <position position="3482"/>
    </location>
</feature>
<feature type="mutagenesis site" description="Decreased autocatalytic cleavage." evidence="17">
    <original>A</original>
    <variation>I</variation>
    <location>
        <position position="3488"/>
    </location>
</feature>
<feature type="mutagenesis site" description="Decreased autocatalytic cleavage." evidence="17">
    <original>L</original>
    <variation>D</variation>
    <location>
        <position position="3492"/>
    </location>
</feature>
<feature type="mutagenesis site" description="Decreased autocatalytic cleavage." evidence="17">
    <original>K</original>
    <variation>A</variation>
    <location>
        <position position="3495"/>
    </location>
</feature>
<feature type="mutagenesis site" description="No effect in autocatalytic cleavage." evidence="17">
    <original>SS</original>
    <variation>AA</variation>
    <location>
        <begin position="3499"/>
        <end position="3500"/>
    </location>
</feature>
<feature type="mutagenesis site" description="No effect in autocatalytic cleavage." evidence="17">
    <original>K</original>
    <variation>A</variation>
    <location>
        <position position="3524"/>
    </location>
</feature>
<feature type="mutagenesis site" description="Decreased autocatalytic cleavage." evidence="17">
    <original>R</original>
    <variation>A</variation>
    <location>
        <position position="3526"/>
    </location>
</feature>
<feature type="mutagenesis site" description="Abolishes autocatalytic cleavage." evidence="12 17">
    <original>H</original>
    <variation>A</variation>
    <location>
        <position position="3532"/>
    </location>
</feature>
<feature type="mutagenesis site" description="Increased autocatalytic cleavage." evidence="17">
    <original>R</original>
    <variation>A</variation>
    <location>
        <position position="3534"/>
    </location>
</feature>
<feature type="mutagenesis site" description="No effect in autocatalytic cleavage." evidence="17">
    <original>S</original>
    <variation>A</variation>
    <location>
        <position position="3537"/>
    </location>
</feature>
<feature type="mutagenesis site" description="Does not affect autocatalytic cleavage." evidence="12">
    <original>E</original>
    <variation>A</variation>
    <location>
        <position position="3551"/>
    </location>
</feature>
<feature type="mutagenesis site" description="No effect in autocatalytic cleavage." evidence="17">
    <original>L</original>
    <variation>A</variation>
    <location>
        <position position="3552"/>
    </location>
</feature>
<feature type="mutagenesis site" description="No effect in autocatalytic cleavage." evidence="17">
    <original>K</original>
    <variation>A</variation>
    <location>
        <position position="3572"/>
    </location>
</feature>
<feature type="mutagenesis site" description="Abolishes autocatalytic cleavage." evidence="12 17 21">
    <original>C</original>
    <variation>S</variation>
    <variation>A</variation>
    <location>
        <position position="3581"/>
    </location>
</feature>
<feature type="mutagenesis site" description="Increased autocatalytic cleavage." evidence="17">
    <original>R</original>
    <variation>A</variation>
    <location>
        <position position="3606"/>
    </location>
</feature>
<feature type="mutagenesis site" description="No effect in autocatalytic cleavage." evidence="17">
    <original>V</original>
    <variation>A</variation>
    <location>
        <position position="3609"/>
    </location>
</feature>
<feature type="mutagenesis site" description="Decreased autocatalytic cleavage." evidence="17">
    <original>R</original>
    <variation>A</variation>
    <location>
        <position position="3612"/>
    </location>
</feature>
<feature type="mutagenesis site" description="Slightly reduced inositol hexakisphosphate-binding and strongly decreased autocatalytic cleavage." evidence="18">
    <original>D</original>
    <variation>A</variation>
    <variation>N</variation>
    <location>
        <position position="3619"/>
    </location>
</feature>
<feature type="mutagenesis site" description="Does not affect inositol hexakisphosphate-binding." evidence="18">
    <original>E</original>
    <variation>A</variation>
    <location>
        <position position="3620"/>
    </location>
</feature>
<feature type="mutagenesis site" description="Decreased autocatalytic cleavage." evidence="17">
    <original>R</original>
    <variation>A</variation>
    <location>
        <position position="3623"/>
    </location>
</feature>
<feature type="mutagenesis site" description="Slightly reduced inositol hexakisphosphate-binding and strongly decreased autocatalytic cleavage." evidence="18">
    <original>R</original>
    <variation>Q</variation>
    <location>
        <position position="3623"/>
    </location>
</feature>
<feature type="mutagenesis site" description="Decreased autocatalytic cleavage." evidence="17">
    <original>K</original>
    <variation>A</variation>
    <location>
        <position position="3624"/>
    </location>
</feature>
<feature type="mutagenesis site" description="Abolishes inositol hexakisphosphate-binding and autocatalytic cleavage." evidence="18">
    <original>K</original>
    <variation>N</variation>
    <location>
        <position position="3624"/>
    </location>
</feature>
<feature type="mutagenesis site" description="Does not affect inositol hexakisphosphate-binding." evidence="18">
    <original>D</original>
    <variation>A</variation>
    <location>
        <position position="3632"/>
    </location>
</feature>
<feature type="mutagenesis site" description="Reduced inositol hexakisphosphate-binding and autocatalytic cleavage." evidence="18">
    <original>W</original>
    <variation>A</variation>
    <location>
        <position position="3633"/>
    </location>
</feature>
<feature type="mutagenesis site" description="Slightly reduced inositol hexakisphosphate-binding and strongly decreased autocatalytic cleavage." evidence="18">
    <original>W</original>
    <variation>F</variation>
    <location>
        <position position="3633"/>
    </location>
</feature>
<feature type="mutagenesis site" description="Abolishes inositol hexakisphosphate-binding and autocatalytic cleavage." evidence="18">
    <original>K</original>
    <variation>N</variation>
    <location>
        <position position="3636"/>
    </location>
</feature>
<feature type="mutagenesis site" description="Decreased autocatalytic cleavage." evidence="17">
    <original>K</original>
    <variation>A</variation>
    <location>
        <position position="3641"/>
    </location>
</feature>
<feature type="strand" evidence="45">
    <location>
        <begin position="3366"/>
        <end position="3371"/>
    </location>
</feature>
<feature type="helix" evidence="45">
    <location>
        <begin position="3376"/>
        <end position="3391"/>
    </location>
</feature>
<feature type="turn" evidence="45">
    <location>
        <begin position="3393"/>
        <end position="3395"/>
    </location>
</feature>
<feature type="helix" evidence="45">
    <location>
        <begin position="3398"/>
        <end position="3410"/>
    </location>
</feature>
<feature type="helix" evidence="45">
    <location>
        <begin position="3417"/>
        <end position="3427"/>
    </location>
</feature>
<feature type="helix" evidence="44">
    <location>
        <begin position="3452"/>
        <end position="3454"/>
    </location>
</feature>
<feature type="strand" evidence="44">
    <location>
        <begin position="3472"/>
        <end position="3478"/>
    </location>
</feature>
<feature type="helix" evidence="44">
    <location>
        <begin position="3483"/>
        <end position="3495"/>
    </location>
</feature>
<feature type="helix" evidence="44">
    <location>
        <begin position="3496"/>
        <end position="3499"/>
    </location>
</feature>
<feature type="strand" evidence="44">
    <location>
        <begin position="3500"/>
        <end position="3505"/>
    </location>
</feature>
<feature type="strand" evidence="44">
    <location>
        <begin position="3511"/>
        <end position="3516"/>
    </location>
</feature>
<feature type="helix" evidence="44">
    <location>
        <begin position="3518"/>
        <end position="3520"/>
    </location>
</feature>
<feature type="strand" evidence="44">
    <location>
        <begin position="3523"/>
        <end position="3530"/>
    </location>
</feature>
<feature type="strand" evidence="44">
    <location>
        <begin position="3533"/>
        <end position="3535"/>
    </location>
</feature>
<feature type="helix" evidence="44">
    <location>
        <begin position="3549"/>
        <end position="3567"/>
    </location>
</feature>
<feature type="strand" evidence="44">
    <location>
        <begin position="3574"/>
        <end position="3582"/>
    </location>
</feature>
<feature type="strand" evidence="44">
    <location>
        <begin position="3588"/>
        <end position="3591"/>
    </location>
</feature>
<feature type="helix" evidence="44">
    <location>
        <begin position="3592"/>
        <end position="3602"/>
    </location>
</feature>
<feature type="strand" evidence="44">
    <location>
        <begin position="3608"/>
        <end position="3614"/>
    </location>
</feature>
<feature type="strand" evidence="44">
    <location>
        <begin position="3616"/>
        <end position="3618"/>
    </location>
</feature>
<feature type="strand" evidence="44">
    <location>
        <begin position="3624"/>
        <end position="3627"/>
    </location>
</feature>
<feature type="strand" evidence="44">
    <location>
        <begin position="3629"/>
        <end position="3631"/>
    </location>
</feature>
<feature type="strand" evidence="44">
    <location>
        <begin position="3633"/>
        <end position="3636"/>
    </location>
</feature>
<feature type="helix" evidence="44">
    <location>
        <begin position="3638"/>
        <end position="3640"/>
    </location>
</feature>
<feature type="strand" evidence="44">
    <location>
        <begin position="3641"/>
        <end position="3644"/>
    </location>
</feature>
<reference key="1">
    <citation type="journal article" date="1999" name="Proc. Natl. Acad. Sci. U.S.A.">
        <title>Identification of a vibrio cholerae RTX toxin gene cluster that is tightly linked to the cholera toxin prophage.</title>
        <authorList>
            <person name="Lin W."/>
            <person name="Fullner K.J."/>
            <person name="Clayton R."/>
            <person name="Sexton J.A."/>
            <person name="Rogers M.B."/>
            <person name="Calia K.E."/>
            <person name="Calderwood S.B."/>
            <person name="Fraser C."/>
            <person name="Mekalanos J.J."/>
        </authorList>
    </citation>
    <scope>NUCLEOTIDE SEQUENCE [GENOMIC DNA]</scope>
    <source>
        <strain>ATCC 39315 / El Tor Inaba N16961</strain>
    </source>
</reference>
<reference key="2">
    <citation type="journal article" date="2000" name="Nature">
        <title>DNA sequence of both chromosomes of the cholera pathogen Vibrio cholerae.</title>
        <authorList>
            <person name="Heidelberg J.F."/>
            <person name="Eisen J.A."/>
            <person name="Nelson W.C."/>
            <person name="Clayton R.A."/>
            <person name="Gwinn M.L."/>
            <person name="Dodson R.J."/>
            <person name="Haft D.H."/>
            <person name="Hickey E.K."/>
            <person name="Peterson J.D."/>
            <person name="Umayam L.A."/>
            <person name="Gill S.R."/>
            <person name="Nelson K.E."/>
            <person name="Read T.D."/>
            <person name="Tettelin H."/>
            <person name="Richardson D.L."/>
            <person name="Ermolaeva M.D."/>
            <person name="Vamathevan J.J."/>
            <person name="Bass S."/>
            <person name="Qin H."/>
            <person name="Dragoi I."/>
            <person name="Sellers P."/>
            <person name="McDonald L.A."/>
            <person name="Utterback T.R."/>
            <person name="Fleischmann R.D."/>
            <person name="Nierman W.C."/>
            <person name="White O."/>
            <person name="Salzberg S.L."/>
            <person name="Smith H.O."/>
            <person name="Colwell R.R."/>
            <person name="Mekalanos J.J."/>
            <person name="Venter J.C."/>
            <person name="Fraser C.M."/>
        </authorList>
    </citation>
    <scope>NUCLEOTIDE SEQUENCE [LARGE SCALE GENOMIC DNA]</scope>
    <source>
        <strain evidence="40">ATCC 39315 / El Tor Inaba N16961</strain>
    </source>
</reference>
<reference key="3">
    <citation type="journal article" date="2000" name="EMBO J.">
        <title>In vivo covalent cross-linking of cellular actin by the Vibrio cholerae RTX toxin.</title>
        <authorList>
            <person name="Fullner K.J."/>
            <person name="Mekalanos J.J."/>
        </authorList>
    </citation>
    <scope>FUNCTION (ACTIN CROSS-LINKING TOXIN F1 AND ACTIN CROSS-LINKING TOXIN F4)</scope>
    <scope>SUBCELLULAR LOCATION</scope>
</reference>
<reference key="4">
    <citation type="journal article" date="2001" name="Infect. Immun.">
        <title>Vibrio cholerae-induced cellular responses of polarized T84 intestinal epithelial cells are dependent on production of cholera toxin and the RTX toxin.</title>
        <authorList>
            <person name="Fullner K.J."/>
            <person name="Lencer W.I."/>
            <person name="Mekalanos J.J."/>
        </authorList>
    </citation>
    <scope>FUNCTION (MULTIFUNCTIONAL-AUTOPROCESSING REPEATS-IN-TOXIN)</scope>
</reference>
<reference key="5">
    <citation type="journal article" date="2002" name="J. Exp. Med.">
        <title>The contribution of accessory toxins of Vibrio cholerae O1 El Tor to the proinflammatory response in a murine pulmonary cholera model.</title>
        <authorList>
            <person name="Fullner K.J."/>
            <person name="Boucher J.C."/>
            <person name="Hanes M.A."/>
            <person name="Haines G.K. III"/>
            <person name="Meehan B.M."/>
            <person name="Walchle C."/>
            <person name="Sansonetti P.J."/>
            <person name="Mekalanos J.J."/>
        </authorList>
    </citation>
    <scope>FUNCTION (MULTIFUNCTIONAL-AUTOPROCESSING REPEATS-IN-TOXIN)</scope>
</reference>
<reference key="6">
    <citation type="journal article" date="2004" name="J. Bacteriol.">
        <title>Vibrio cholerae strains with mutations in an atypical type I secretion system accumulate RTX toxin intracellularly.</title>
        <authorList>
            <person name="Boardman B.K."/>
            <person name="Satchell K.J."/>
        </authorList>
    </citation>
    <scope>SUBCELLULAR LOCATION (MULTIFUNCTIONAL-AUTOPROCESSING REPEATS-IN-TOXIN)</scope>
</reference>
<reference key="7">
    <citation type="journal article" date="2004" name="Proc. Natl. Acad. Sci. U.S.A.">
        <title>Identification of a domain within the multifunctional Vibrio cholerae RTX toxin that covalently cross-links actin.</title>
        <authorList>
            <person name="Sheahan K.L."/>
            <person name="Cordero C.L."/>
            <person name="Satchell K.J."/>
        </authorList>
    </citation>
    <scope>FUNCTION (ACTIN CROSS-LINKING TOXIN F1 AND ACTIN CROSS-LINKING TOXIN F4)</scope>
</reference>
<reference key="8">
    <citation type="journal article" date="2006" name="J. Biol. Chem.">
        <title>The Actin cross-linking domain of the Vibrio cholerae RTX toxin directly catalyzes the covalent cross-linking of actin.</title>
        <authorList>
            <person name="Cordero C.L."/>
            <person name="Kudryashov D.S."/>
            <person name="Reisler E."/>
            <person name="Satchell K.J."/>
        </authorList>
    </citation>
    <scope>FUNCTION (ACTIN CROSS-LINKING TOXIN F1 AND ACTIN CROSS-LINKING TOXIN F4)</scope>
    <scope>COFACTOR</scope>
</reference>
<reference key="9">
    <citation type="journal article" date="2007" name="Cell. Microbiol.">
        <title>Inactivation of small Rho GTPases by the multifunctional RTX toxin from Vibrio cholerae.</title>
        <authorList>
            <person name="Sheahan K.L."/>
            <person name="Satchell K.J."/>
        </authorList>
    </citation>
    <scope>FUNCTION (N-EPSILON-FATTY ACYLTRANSFERASE F2)</scope>
</reference>
<reference key="10">
    <citation type="journal article" date="2007" name="EMBO J.">
        <title>Autoprocessing of the Vibrio cholerae RTX toxin by the cysteine protease domain.</title>
        <authorList>
            <person name="Sheahan K.L."/>
            <person name="Cordero C.L."/>
            <person name="Satchell K.J."/>
        </authorList>
    </citation>
    <scope>FUNCTION (MULTIFUNCTIONAL-AUTOPROCESSING REPEATS-IN-TOXIN)</scope>
    <scope>ACTIVE SITE</scope>
    <scope>CLEAVAGE SITE</scope>
    <scope>ACTIVITY REGULATION</scope>
    <scope>MUTAGENESIS OF HIS-3532; GLU-3551 AND CYS-3581</scope>
</reference>
<reference key="11">
    <citation type="journal article" date="2007" name="Infect. Immun.">
        <title>Hemolysin and the multifunctional autoprocessing RTX toxin are virulence factors during intestinal infection of mice with Vibrio cholerae El Tor O1 strains.</title>
        <authorList>
            <person name="Olivier V."/>
            <person name="Haines G.K. III"/>
            <person name="Tan Y."/>
            <person name="Satchell K.J."/>
        </authorList>
    </citation>
    <scope>FUNCTION (MULTIFUNCTIONAL-AUTOPROCESSING REPEATS-IN-TOXIN AND CYSTEINE PROTEASE DOMAIN-CONTAINING TOXIN F3)</scope>
</reference>
<reference key="12">
    <citation type="journal article" date="2007" name="Infect. Immun.">
        <title>Prolonged colonization of mice by Vibrio cholerae El Tor O1 depends on accessory toxins.</title>
        <authorList>
            <person name="Olivier V."/>
            <person name="Salzman N.H."/>
            <person name="Satchell K.J."/>
        </authorList>
    </citation>
    <scope>FUNCTION (MULTIFUNCTIONAL-AUTOPROCESSING REPEATS-IN-TOXIN AND CYSTEINE PROTEASE DOMAIN-CONTAINING TOXIN F3)</scope>
</reference>
<reference key="13">
    <citation type="journal article" date="2008" name="J. Biol. Chem.">
        <title>Characterization of the enzymatic activity of the actin cross-linking domain from the Vibrio cholerae MARTX Vc toxin.</title>
        <authorList>
            <person name="Kudryashov D.S."/>
            <person name="Cordero C.L."/>
            <person name="Reisler E."/>
            <person name="Satchell K.J."/>
        </authorList>
    </citation>
    <scope>FUNCTION (ACTIN CROSS-LINKING TOXIN F1 AND ACTIN CROSS-LINKING TOXIN F4)</scope>
</reference>
<reference key="14">
    <citation type="journal article" date="2008" name="J. Biol. Chem.">
        <title>Structure-function analysis of inositol hexakisphosphate-induced autoprocessing of the Vibrio cholerae multifunctional autoprocessing RTX toxin.</title>
        <authorList>
            <person name="Prochazkova K."/>
            <person name="Satchell K.J."/>
        </authorList>
    </citation>
    <scope>FUNCTION (MULTIFUNCTIONAL-AUTOPROCESSING REPEATS-IN-TOXIN)</scope>
    <scope>ACTIVITY REGULATION</scope>
    <scope>CLEAVAGE SITE</scope>
    <scope>MUTAGENESIS OF PRO-3462; ARG-3470; ILE-3476; GLN-3478; GLU-3480; ASP-3482; ALA-3488; LEU-3492; LYS-3495; 3499-SER-SER-3500; LYS-3524; ARG-3526; HIS-3532; ARG-3534; SER-3537; LEU-3552; LYS-3572; CYS-3581; ARG-3606; VAL-3609; ARG-3612; ARG-3623; LYS-3624 AND LYS-3641</scope>
</reference>
<reference key="15">
    <citation type="journal article" date="2008" name="Proc. Natl. Acad. Sci. U.S.A.">
        <title>Connecting actin monomers by iso-peptide bond is a toxicity mechanism of the Vibrio cholerae MARTX toxin.</title>
        <authorList>
            <person name="Kudryashov D.S."/>
            <person name="Durer Z.A."/>
            <person name="Ytterberg A.J."/>
            <person name="Sawaya M.R."/>
            <person name="Pashkov I."/>
            <person name="Prochazkova K."/>
            <person name="Yeates T.O."/>
            <person name="Loo R.R."/>
            <person name="Loo J.A."/>
            <person name="Satchell K.J."/>
            <person name="Reisler E."/>
        </authorList>
    </citation>
    <scope>FUNCTION (ACTIN CROSS-LINKING TOXIN F1 AND ACTIN CROSS-LINKING TOXIN F4)</scope>
</reference>
<reference key="16">
    <citation type="journal article" date="2009" name="Mol. Microbiol.">
        <title>Genetic determination of essential residues of the Vibrio cholerae actin cross-linking domain reveals functional similarity with glutamine synthetases.</title>
        <authorList>
            <person name="Geissler B."/>
            <person name="Bonebrake A."/>
            <person name="Sheahan K.L."/>
            <person name="Walker M.E."/>
            <person name="Satchell K.J."/>
        </authorList>
    </citation>
    <scope>FUNCTION (ACTIN CROSS-LINKING TOXIN F1 AND ACTIN CROSS-LINKING TOXIN F4)</scope>
    <scope>MUTAGENESIS OF GLU-2003; GLU-2005; LEU-2035; ASP-2038; GLY-2055; GLU-2065; THR-2068; LEU-2089; HIS-2096; LEU-2117; GLN-2149; ALA-2153; TRP-2175; LEU-2206; VAL-2209; TRP-2250; VAL-2259; GLU-2326 AND ARG-2328</scope>
</reference>
<reference key="17">
    <citation type="journal article" date="2009" name="PLoS ONE">
        <title>Successful small intestine colonization of adult mice by Vibrio cholerae requires ketamine anesthesia and accessory toxins.</title>
        <authorList>
            <person name="Olivier V."/>
            <person name="Queen J."/>
            <person name="Satchell K.J."/>
        </authorList>
    </citation>
    <scope>FUNCTION (MULTIFUNCTIONAL-AUTOPROCESSING REPEATS-IN-TOXIN)</scope>
</reference>
<reference key="18">
    <citation type="journal article" date="2009" name="Proteins">
        <title>The Rho GTPase inactivation domain in Vibrio cholerae MARTX toxin has a circularly permuted papain-like thiol protease fold.</title>
        <authorList>
            <person name="Pei J."/>
            <person name="Grishin N.V."/>
        </authorList>
    </citation>
    <scope>FUNCTION (N-EPSILON-FATTY ACYLTRANSFERASE F2)</scope>
</reference>
<reference key="19">
    <citation type="journal article" date="2010" name="Proc. Natl. Acad. Sci. U.S.A.">
        <title>Identification of a conserved membrane localization domain within numerous large bacterial protein toxins.</title>
        <authorList>
            <person name="Geissler B."/>
            <person name="Tungekar R."/>
            <person name="Satchell K.J."/>
        </authorList>
    </citation>
    <scope>SUBCELLULAR LOCATION (N-EPSILON-FATTY ACYLTRANSFERASE F2)</scope>
    <scope>MUTAGENESIS OF TYR-2596; SER-2641 AND ARG-2643</scope>
</reference>
<reference key="20">
    <citation type="journal article" date="2012" name="Cell. Microbiol.">
        <title>Plasma membrane association of three classes of bacterial toxins is mediated by a basic-hydrophobic motif.</title>
        <authorList>
            <person name="Geissler B."/>
            <person name="Ahrens S."/>
            <person name="Satchell K.J."/>
        </authorList>
    </citation>
    <scope>SUBCELLULAR LOCATION (N-EPSILON-FATTY ACYLTRANSFERASE F2)</scope>
</reference>
<reference key="21">
    <citation type="journal article" date="2012" name="PLoS ONE">
        <title>Glutamyl phosphate is an activated intermediate in actin crosslinking by actin crosslinking domain (ACD) toxin.</title>
        <authorList>
            <person name="Kudryashova E."/>
            <person name="Kalda C."/>
            <person name="Kudryashov D.S."/>
        </authorList>
    </citation>
    <scope>FUNCTION (ACTIN CROSS-LINKING TOXIN F1 AND ACTIN CROSS-LINKING TOXIN F4)</scope>
    <scope>BIOPHYSICOCHEMICAL PROPERTIES</scope>
    <scope>COFACTOR</scope>
</reference>
<reference key="22">
    <citation type="journal article" date="2013" name="J. Biol. Chem.">
        <title>Identification of a His-Asp-Cys catalytic triad essential for function of the Rho inactivation domain (RID) of Vibrio cholerae MARTX toxin.</title>
        <authorList>
            <person name="Ahrens S."/>
            <person name="Geissler B."/>
            <person name="Satchell K.J."/>
        </authorList>
    </citation>
    <scope>FUNCTION (N-EPSILON-FATTY ACYLTRANSFERASE F2)</scope>
    <scope>MUTAGENESIS OF GLU-2734; TYR-2735; ASP-2760; LEU-2764; LYS-2766; HIS-2768; GLU-2772; SER-2776; SER-2779; THR-2781; LYS-2786; SER-2788; HIS-2790; SER-2791; LEU-2793; HIS-2795; LEU-2798; ARG-2804; TYR-2820; SER-2822; LYS-2829; SER-2830; ARG-2850; LEU-2864; ASP-2867; GLU-2871; GLU-2872; ASP-2874; ARG-2887; LEU-2914; ARG-2950; ARG-2956; ARG-2961; ARG-2971; ARG-2977; GLU-2981; ARG-2982; LYS-2991; SER-2993; ASP-2996; ARG-2999; ARG-3002; LEU-3005; LEU-3008; GLU-3016; ARG-3019; ARG-3027; TYR-3028; LEU-3031; CYS-3035; SER-3036; SER-3037; LEU-3043; LYS-3044; ASP-3049; HIS-3054; THR-3064 AND GLU-3077</scope>
</reference>
<reference key="23">
    <citation type="journal article" date="2015" name="Microbiol. Spectr.">
        <title>Multifunctional-autoprocessing repeats-in-toxin (MARTX) Toxins of Vibrios.</title>
        <authorList>
            <person name="Satchell K.J."/>
        </authorList>
    </citation>
    <scope>REVIEW</scope>
</reference>
<reference key="24">
    <citation type="journal article" date="2015" name="Mol. Microbiol.">
        <title>Vibrio cholerae MARTX toxin heterologous translocation of beta-lactamase and roles of individual effector domains on cytoskeleton dynamics.</title>
        <authorList>
            <person name="Dolores J.S."/>
            <person name="Agarwal S."/>
            <person name="Egerer M."/>
            <person name="Satchell K.J."/>
        </authorList>
    </citation>
    <scope>FUNCTION (ABH EFFECTOR REGION TOXIN F5)</scope>
</reference>
<reference key="25">
    <citation type="journal article" date="2015" name="Science">
        <title>ACD toxin-produced actin oligomers poison formin-controlled actin polymerization.</title>
        <authorList>
            <person name="Heisler D.B."/>
            <person name="Kudryashova E."/>
            <person name="Grinevich D.O."/>
            <person name="Suarez C."/>
            <person name="Winkelman J.D."/>
            <person name="Birukov K.G."/>
            <person name="Kotha S.R."/>
            <person name="Parinandi N.L."/>
            <person name="Vavylonis D."/>
            <person name="Kovar D.R."/>
            <person name="Kudryashov D.S."/>
        </authorList>
    </citation>
    <scope>FUNCTION (ACTIN CROSS-LINKING TOXIN F1 AND ACTIN CROSS-LINKING TOXIN F4)</scope>
</reference>
<reference key="26">
    <citation type="journal article" date="2017" name="Science">
        <title>Nepsilon-fatty acylation of Rho GTPases by a MARTX toxin effector.</title>
        <authorList>
            <person name="Zhou Y."/>
            <person name="Huang C."/>
            <person name="Yin L."/>
            <person name="Wan M."/>
            <person name="Wang X."/>
            <person name="Li L."/>
            <person name="Liu Y."/>
            <person name="Wang Z."/>
            <person name="Fu P."/>
            <person name="Zhang N."/>
            <person name="Chen S."/>
            <person name="Liu X."/>
            <person name="Shao F."/>
            <person name="Zhu Y."/>
        </authorList>
    </citation>
    <scope>FUNCTION (N-EPSILON-FATTY ACYLTRANSFERASE F2)</scope>
    <scope>CATALYTIC ACTIVITY (N-EPSILON-FATTY ACYLTRANSFERASE F2)</scope>
    <scope>MUTAGENESIS OF HIS-2795 AND CYS-3035</scope>
</reference>
<reference evidence="41" key="27">
    <citation type="journal article" date="2008" name="Science">
        <title>Small molecule-induced allosteric activation of the Vibrio cholerae RTX cysteine protease domain.</title>
        <authorList>
            <person name="Lupardus P.J."/>
            <person name="Shen A."/>
            <person name="Bogyo M."/>
            <person name="Garcia K.C."/>
        </authorList>
    </citation>
    <scope>X-RAY CRYSTALLOGRAPHY (2.10 ANGSTROMS) OF 3442-3650 IN COMPLEX WITH INOSITOL HEXAKISPHOSPHATE</scope>
    <scope>FUNCTION (MULTIFUNCTIONAL-AUTOPROCESSING REPEATS-IN-TOXIN)</scope>
    <scope>ACTIVITY REGULATION</scope>
    <scope>MUTAGENESIS OF ASP-3619; GLU-3620; ARG-3623; LYS-3624; ASP-3632; TRP-3633 AND LYS-3636</scope>
</reference>
<reference evidence="42" key="28">
    <citation type="journal article" date="2009" name="J. Biol. Chem.">
        <title>Structural and molecular mechanism for autoprocessing of MARTX toxin of Vibrio cholerae at multiple sites.</title>
        <authorList>
            <person name="Prochazkova K."/>
            <person name="Shuvalova L.A."/>
            <person name="Minasov G."/>
            <person name="Voburka Z."/>
            <person name="Anderson W.F."/>
            <person name="Satchell K.J."/>
        </authorList>
    </citation>
    <scope>X-RAY CRYSTALLOGRAPHY (1.95 ANGSTROMS) OF 3440-3650 IN COMPLEX WITH INOSITOL HEXAKISPHOSPHATE</scope>
    <scope>PARTIAL PROTEIN SEQUENCE</scope>
    <scope>SUBCELLULAR LOCATION</scope>
    <scope>FUNCTION (MULTIFUNCTIONAL-AUTOPROCESSING REPEATS-IN-TOXIN AND CYSTEINE PROTEASE DOMAIN-CONTAINING TOXIN F3)</scope>
    <scope>ACTIVITY REGULATION</scope>
    <scope>CLEAVAGE SITES</scope>
</reference>
<reference evidence="43" key="29">
    <citation type="journal article" date="2009" name="Nat. Chem. Biol.">
        <title>Mechanistic and structural insights into the proteolytic activation of Vibrio cholerae MARTX toxin.</title>
        <authorList>
            <person name="Shen A."/>
            <person name="Lupardus P.J."/>
            <person name="Albrow V.E."/>
            <person name="Guzzetta A."/>
            <person name="Powers J.C."/>
            <person name="Garcia K.C."/>
            <person name="Bogyo M."/>
        </authorList>
    </citation>
    <scope>X-RAY CRYSTALLOGRAPHY (2.35 ANGSTROMS) OF 3442-3650 IN COMPLEX WITH INOSITOL HEXAKISPHOSPHATE AND INHIBITOR</scope>
    <scope>FUNCTION (MULTIFUNCTIONAL-AUTOPROCESSING REPEATS-IN-TOXIN)</scope>
    <scope>ACTIVITY REGULATION</scope>
    <scope>CLEAVAGE SITES</scope>
    <scope>MUTAGENESIS OF LEU-2447; LEU-3098; LEU-3441 AND CYS-3581</scope>
</reference>
<comment type="function">
    <molecule>Multifunctional-autoprocessing repeats-in-toxin</molecule>
    <text evidence="7 8 12 17 18 21 22 24 33">Precursor of a multifunctional toxin that causes destruction of the actin cytoskeleton by covalent cross-linking of actin and inactivation of Rho GTPases when translocated into the host cytoplasm (PubMed:26185092). Upon translocation into the host cell, undergoes autoprocessing in cis mediated by the peptidase C80 domain (also named CPD domain): the protease activity is activated upon binding inositol hexakisphosphate (InsP6) present at the host cell membrane and delivers the Cysteine protease domain-containing toxin F3 chain to the host cytosol (PubMed:17464284, PubMed:18591243, PubMed:18845756, PubMed:19465933, PubMed:19620709). The Cysteine protease domain-containing toxin F3 chain will then further cleave and release effector toxin chains that cause disassembly of the actin cytoskeleton and enhance V.cholerae colonization of the small intestine, possibly by facilitating evasion of phagocytic cells (PubMed:11553575, PubMed:12045243, PubMed:17698571, PubMed:17698573, PubMed:19620709, PubMed:19812690).</text>
</comment>
<comment type="function">
    <molecule>Cysteine protease domain-containing toxin F3</molecule>
    <text evidence="14 15 22">Following autocatalytic cleavage in cis at the Leu-3441-Ala-3442 site, this chain mediates processing in trans to release other individual toxin chains to the host cytosol (PubMed:19620709). Released effector toxin chains cause disassembly of the actin cytoskeleton and enhance V.cholerae colonization of the small intestine, possibly by facilitating evasion of phagocytic cells (PubMed:17698571, PubMed:17698573).</text>
</comment>
<comment type="function">
    <molecule>Actin cross-linking toxin F1</molecule>
    <text evidence="6 9 11 16 19 23 27 30">Actin-directed toxin that catalyzes the covalent cross-linking of host cytoplasmic monomeric actin (PubMed:11032799, PubMed:15199181, PubMed:16954226, PubMed:17951576, PubMed:19015515, PubMed:19656298, PubMed:23029200, PubMed:26228148). Mediates the cross-link between 'Lys-50' of one monomer and 'Glu-270' of another actin monomer, resulting in formation of highly toxic actin oligomers that cause cell rounding (PubMed:19015515). The toxin can be highly efficient at very low concentrations by acting on formin homology family proteins: toxic actin oligomers bind with high affinity to formins and adversely affect both nucleation and elongation abilities of formins, causing their potent inhibition in both profilin-dependent and independent manners (PubMed:26228148). Acts as an acid--amino-acid ligase that transfers the gamma-phosphoryl group of ATP to the 'Glu-270' actin residue, resulting in the formation of an activated acyl phosphate intermediate. This intermediate is further hydrolyzed and the energy of hydrolysis is utilized for the formation of the amide bond between actin subunits (PubMed:23029200).</text>
</comment>
<comment type="function">
    <molecule>Actin cross-linking toxin F4</molecule>
    <text evidence="6 9 11 16 19 23 27 30">Actin-directed toxin that catalyzes the covalent cross-linking of host cytoplasmic monomeric actin (PubMed:11032799, PubMed:15199181, PubMed:16954226, PubMed:17951576, PubMed:19015515, PubMed:19656298, PubMed:23029200, PubMed:26228148). Mediates the cross-link between 'Lys-50' of one monomer and 'Glu-270' of another actin monomer, resulting in formation of highly toxic actin oligomers that cause cell rounding (PubMed:19015515). The toxin can be highly efficient at very low concentrations by acting on formin homology family proteins: toxic actin oligomers bind with high affinity to formins and adversely affect both nucleation and elongation abilities of formins, causing their potent inhibition in both profilin-dependent and independent manners (PubMed:26228148). Acts as an acid--amino-acid ligase that transfers the gamma-phosphoryl group of ATP to the 'Glu-270' actin residue, resulting in the formation of an activated acyl phosphate intermediate. This intermediate is further hydrolyzed and the energy of hydrolysis is utilized for the formation of the amide bond between actin subunits (PubMed:23029200).</text>
</comment>
<comment type="function">
    <molecule>N-epsilon-fatty acyltransferase F2</molecule>
    <text evidence="13 20 28 31">N-epsilon-fatty acyltransferase that mediates lysine-palmitoylation of host Rho GTPase proteins, with a strong preference for host Rac1 (PubMed:29074776). After delivery to the host cytosol, localizes to the host cell membrane where it palmitoylates host Rho GTPase proteins, resulting in loss of all active GTP-bound Rho and subsequent actin depolymerization (PubMed:17474905, PubMed:19434753, PubMed:23184949, PubMed:29074776). Prenylation of host Rac1 at the C-terminus is required for lysine-palmitoylation (PubMed:29074776).</text>
</comment>
<comment type="function">
    <molecule>ABH effector region toxin F5</molecule>
    <text evidence="29">Indirectly activates the small GTPase CDC42.</text>
</comment>
<comment type="catalytic activity">
    <molecule>N-epsilon-fatty acyltransferase F2</molecule>
    <reaction evidence="31">
        <text>L-lysyl-/S-(2E,6E,10E)-geranylgeranyl-L-cysteinyl-[protein] + hexadecanoyl-CoA = N(6)-hexadecanoyl-L-lysyl-/S-(2E,6E,10E)-geranylgeranyl-L-cysteinyl-[protein] + CoA + H(+)</text>
        <dbReference type="Rhea" id="RHEA:59768"/>
        <dbReference type="Rhea" id="RHEA-COMP:17936"/>
        <dbReference type="Rhea" id="RHEA-COMP:17953"/>
        <dbReference type="ChEBI" id="CHEBI:15378"/>
        <dbReference type="ChEBI" id="CHEBI:29969"/>
        <dbReference type="ChEBI" id="CHEBI:57287"/>
        <dbReference type="ChEBI" id="CHEBI:57379"/>
        <dbReference type="ChEBI" id="CHEBI:86021"/>
        <dbReference type="ChEBI" id="CHEBI:138936"/>
    </reaction>
    <physiologicalReaction direction="left-to-right" evidence="31">
        <dbReference type="Rhea" id="RHEA:59769"/>
    </physiologicalReaction>
</comment>
<comment type="catalytic activity">
    <molecule>N-epsilon-fatty acyltransferase F2</molecule>
    <reaction evidence="31">
        <text>L-lysyl-/S-(2E,6E,10E)-geranylgeranyl-L-cysteinyl-[protein] + dodecanoyl-CoA = N(6)-dodecanoyl-L-lysyl-/S-(2E,6E,10E)-geranylgeranyl-L-cysteinyl-[protein] + CoA + H(+)</text>
        <dbReference type="Rhea" id="RHEA:59796"/>
        <dbReference type="Rhea" id="RHEA-COMP:17936"/>
        <dbReference type="Rhea" id="RHEA-COMP:17954"/>
        <dbReference type="ChEBI" id="CHEBI:15378"/>
        <dbReference type="ChEBI" id="CHEBI:29969"/>
        <dbReference type="ChEBI" id="CHEBI:57287"/>
        <dbReference type="ChEBI" id="CHEBI:57375"/>
        <dbReference type="ChEBI" id="CHEBI:86021"/>
        <dbReference type="ChEBI" id="CHEBI:143221"/>
    </reaction>
    <physiologicalReaction direction="left-to-right" evidence="31">
        <dbReference type="Rhea" id="RHEA:59797"/>
    </physiologicalReaction>
</comment>
<comment type="catalytic activity">
    <molecule>N-epsilon-fatty acyltransferase F2</molecule>
    <reaction evidence="31">
        <text>L-lysyl-/S-(2E,6E,10E)-geranylgeranyl-L-cysteinyl-[protein] + decanoyl-CoA = N(6)-decanoyl-L-lysyl-/S-(2E,6E,10E)-geranylgeranyl-L-cysteinyl-[protein] + CoA + H(+)</text>
        <dbReference type="Rhea" id="RHEA:59800"/>
        <dbReference type="Rhea" id="RHEA-COMP:17936"/>
        <dbReference type="Rhea" id="RHEA-COMP:17955"/>
        <dbReference type="ChEBI" id="CHEBI:15378"/>
        <dbReference type="ChEBI" id="CHEBI:29969"/>
        <dbReference type="ChEBI" id="CHEBI:57287"/>
        <dbReference type="ChEBI" id="CHEBI:61430"/>
        <dbReference type="ChEBI" id="CHEBI:86021"/>
        <dbReference type="ChEBI" id="CHEBI:143222"/>
    </reaction>
    <physiologicalReaction direction="left-to-right" evidence="31">
        <dbReference type="Rhea" id="RHEA:59801"/>
    </physiologicalReaction>
</comment>
<comment type="cofactor">
    <cofactor evidence="11 27">
        <name>Mg(2+)</name>
        <dbReference type="ChEBI" id="CHEBI:18420"/>
    </cofactor>
    <text evidence="1">Binds 2 Mg(2+) ions per subunit. Mg(2+) is required for actin cross-linking activity. Can also use Mn(2+) ions instead of Mg(2+).</text>
</comment>
<comment type="activity regulation">
    <text evidence="12 18 21 22">Protease activity is inhibited by N-ethylmaleimide but not other protease inhibitors (PubMed:17464284). Protease activity is inhibited by aza-leucine epoxide (PubMed:19465933). Protease activity is activated upon binding inositol hexakisphosphate (InsP6) via an allosteric mechanism: the active site is disordered or occluded in the absence of InsP6, protecting the protease active-site sulfhydryl until the toxin enters a eukaryotic cell (PubMed:18845756, PubMed:19620709). Upon processing at the Leu-3441-Ala-3442 site, the peptidase C80 domain is converted to a form with much reduced affinity for InsP6, but is reactivated for high affinity binding of InsP6 by cooperative binding of both a new substrate and InsP6. Reactivation allows cleavage at other sites, specifically at Leu residues between the effector domains (PubMed:19620709).</text>
</comment>
<comment type="biophysicochemical properties">
    <kinetics>
        <KM evidence="27">7.8 uM for ATP (for actin cross-linking activity)</KM>
        <KM evidence="27">49.9 uM for GTP (for actin cross-linking activity)</KM>
    </kinetics>
    <phDependence>
        <text evidence="27">Optimum pH is 7.0-9.0.</text>
    </phDependence>
</comment>
<comment type="interaction">
    <interactant intactId="EBI-15741102">
        <id>Q9KS12</id>
    </interactant>
    <interactant intactId="EBI-367540">
        <id>P68135</id>
        <label>ACTA1</label>
    </interactant>
    <organismsDiffer>true</organismsDiffer>
    <experiments>4</experiments>
</comment>
<comment type="subcellular location">
    <molecule>Multifunctional-autoprocessing repeats-in-toxin</molecule>
    <subcellularLocation>
        <location evidence="6 10">Secreted</location>
    </subcellularLocation>
    <subcellularLocation>
        <location evidence="33">Host cytoplasm</location>
        <location evidence="33">Host cytosol</location>
    </subcellularLocation>
    <text evidence="6">Secreted via the type I secretion system.</text>
</comment>
<comment type="subcellular location">
    <molecule>N-epsilon-fatty acyltransferase F2</molecule>
    <subcellularLocation>
        <location evidence="25 26">Host cell membrane</location>
    </subcellularLocation>
    <text evidence="25">Targeted to the host cell membrane via the membrane localization region (MLD).</text>
</comment>
<comment type="subcellular location">
    <molecule>Actin cross-linking toxin F1</molecule>
    <subcellularLocation>
        <location evidence="38">Host cytoplasm</location>
        <location evidence="38">Host cytosol</location>
    </subcellularLocation>
</comment>
<comment type="subcellular location">
    <molecule>Actin cross-linking toxin F4</molecule>
    <subcellularLocation>
        <location evidence="38">Host cytoplasm</location>
        <location evidence="38">Host cytosol</location>
    </subcellularLocation>
</comment>
<comment type="sequence caution" evidence="36">
    <conflict type="erroneous initiation">
        <sequence resource="EMBL-CDS" id="AAD21057"/>
    </conflict>
    <text>Truncated N-terminus.</text>
</comment>
<proteinExistence type="evidence at protein level"/>
<accession>Q9KS12</accession>
<accession>Q9X4W2</accession>
<evidence type="ECO:0000250" key="1">
    <source>
        <dbReference type="UniProtKB" id="A0A0H3AIG7"/>
    </source>
</evidence>
<evidence type="ECO:0000255" key="2"/>
<evidence type="ECO:0000255" key="3">
    <source>
        <dbReference type="PROSITE-ProRule" id="PRU01107"/>
    </source>
</evidence>
<evidence type="ECO:0000255" key="4">
    <source>
        <dbReference type="PROSITE-ProRule" id="PRU01108"/>
    </source>
</evidence>
<evidence type="ECO:0000256" key="5">
    <source>
        <dbReference type="SAM" id="MobiDB-lite"/>
    </source>
</evidence>
<evidence type="ECO:0000269" key="6">
    <source>
    </source>
</evidence>
<evidence type="ECO:0000269" key="7">
    <source>
    </source>
</evidence>
<evidence type="ECO:0000269" key="8">
    <source>
    </source>
</evidence>
<evidence type="ECO:0000269" key="9">
    <source>
    </source>
</evidence>
<evidence type="ECO:0000269" key="10">
    <source>
    </source>
</evidence>
<evidence type="ECO:0000269" key="11">
    <source>
    </source>
</evidence>
<evidence type="ECO:0000269" key="12">
    <source>
    </source>
</evidence>
<evidence type="ECO:0000269" key="13">
    <source>
    </source>
</evidence>
<evidence type="ECO:0000269" key="14">
    <source>
    </source>
</evidence>
<evidence type="ECO:0000269" key="15">
    <source>
    </source>
</evidence>
<evidence type="ECO:0000269" key="16">
    <source>
    </source>
</evidence>
<evidence type="ECO:0000269" key="17">
    <source>
    </source>
</evidence>
<evidence type="ECO:0000269" key="18">
    <source>
    </source>
</evidence>
<evidence type="ECO:0000269" key="19">
    <source>
    </source>
</evidence>
<evidence type="ECO:0000269" key="20">
    <source>
    </source>
</evidence>
<evidence type="ECO:0000269" key="21">
    <source>
    </source>
</evidence>
<evidence type="ECO:0000269" key="22">
    <source>
    </source>
</evidence>
<evidence type="ECO:0000269" key="23">
    <source>
    </source>
</evidence>
<evidence type="ECO:0000269" key="24">
    <source>
    </source>
</evidence>
<evidence type="ECO:0000269" key="25">
    <source>
    </source>
</evidence>
<evidence type="ECO:0000269" key="26">
    <source>
    </source>
</evidence>
<evidence type="ECO:0000269" key="27">
    <source>
    </source>
</evidence>
<evidence type="ECO:0000269" key="28">
    <source>
    </source>
</evidence>
<evidence type="ECO:0000269" key="29">
    <source>
    </source>
</evidence>
<evidence type="ECO:0000269" key="30">
    <source>
    </source>
</evidence>
<evidence type="ECO:0000269" key="31">
    <source>
    </source>
</evidence>
<evidence type="ECO:0000303" key="32">
    <source>
    </source>
</evidence>
<evidence type="ECO:0000303" key="33">
    <source>
    </source>
</evidence>
<evidence type="ECO:0000303" key="34">
    <source>
    </source>
</evidence>
<evidence type="ECO:0000303" key="35">
    <source>
    </source>
</evidence>
<evidence type="ECO:0000305" key="36"/>
<evidence type="ECO:0000305" key="37">
    <source>
    </source>
</evidence>
<evidence type="ECO:0000305" key="38">
    <source>
    </source>
</evidence>
<evidence type="ECO:0000312" key="39">
    <source>
        <dbReference type="EMBL" id="AAF94608.1"/>
    </source>
</evidence>
<evidence type="ECO:0000312" key="40">
    <source>
        <dbReference type="Proteomes" id="UP000000584"/>
    </source>
</evidence>
<evidence type="ECO:0007744" key="41">
    <source>
        <dbReference type="PDB" id="3EEB"/>
    </source>
</evidence>
<evidence type="ECO:0007744" key="42">
    <source>
        <dbReference type="PDB" id="3FZY"/>
    </source>
</evidence>
<evidence type="ECO:0007744" key="43">
    <source>
        <dbReference type="PDB" id="3GCD"/>
    </source>
</evidence>
<evidence type="ECO:0007829" key="44">
    <source>
        <dbReference type="PDB" id="3FZY"/>
    </source>
</evidence>
<evidence type="ECO:0007829" key="45">
    <source>
        <dbReference type="PDB" id="6EN3"/>
    </source>
</evidence>
<name>MARTX_VIBCH</name>
<organism>
    <name type="scientific">Vibrio cholerae serotype O1 (strain ATCC 39315 / El Tor Inaba N16961)</name>
    <dbReference type="NCBI Taxonomy" id="243277"/>
    <lineage>
        <taxon>Bacteria</taxon>
        <taxon>Pseudomonadati</taxon>
        <taxon>Pseudomonadota</taxon>
        <taxon>Gammaproteobacteria</taxon>
        <taxon>Vibrionales</taxon>
        <taxon>Vibrionaceae</taxon>
        <taxon>Vibrio</taxon>
    </lineage>
</organism>
<dbReference type="EC" id="3.4.22.-" evidence="12"/>
<dbReference type="EC" id="6.3.2.-" evidence="27"/>
<dbReference type="EC" id="2.3.1.-" evidence="31"/>
<dbReference type="EMBL" id="AF119150">
    <property type="protein sequence ID" value="AAD21057.1"/>
    <property type="status" value="ALT_INIT"/>
    <property type="molecule type" value="Genomic_DNA"/>
</dbReference>
<dbReference type="EMBL" id="AE003852">
    <property type="protein sequence ID" value="AAF94608.1"/>
    <property type="molecule type" value="Genomic_DNA"/>
</dbReference>
<dbReference type="PIR" id="C82199">
    <property type="entry name" value="C82199"/>
</dbReference>
<dbReference type="RefSeq" id="NP_231094.1">
    <property type="nucleotide sequence ID" value="NC_002505.1"/>
</dbReference>
<dbReference type="PDB" id="3EEB">
    <property type="method" value="X-ray"/>
    <property type="resolution" value="2.10 A"/>
    <property type="chains" value="A/B=3442-3650"/>
</dbReference>
<dbReference type="PDB" id="3FZY">
    <property type="method" value="X-ray"/>
    <property type="resolution" value="1.95 A"/>
    <property type="chains" value="A/B=3440-3650"/>
</dbReference>
<dbReference type="PDB" id="3GCD">
    <property type="method" value="X-ray"/>
    <property type="resolution" value="2.35 A"/>
    <property type="chains" value="A/B/C/D=3442-3650"/>
</dbReference>
<dbReference type="PDB" id="6EN3">
    <property type="method" value="X-ray"/>
    <property type="resolution" value="2.90 A"/>
    <property type="chains" value="A=3444-3649"/>
</dbReference>
<dbReference type="PDBsum" id="3EEB"/>
<dbReference type="PDBsum" id="3FZY"/>
<dbReference type="PDBsum" id="3GCD"/>
<dbReference type="PDBsum" id="6EN3"/>
<dbReference type="SMR" id="Q9KS12"/>
<dbReference type="DIP" id="DIP-48626N"/>
<dbReference type="IntAct" id="Q9KS12">
    <property type="interactions" value="2"/>
</dbReference>
<dbReference type="STRING" id="243277.VC_1451"/>
<dbReference type="SwissLipids" id="SLP:000001953"/>
<dbReference type="ESTHER" id="vibch-rtxAABH">
    <property type="family name" value="6_AlphaBeta_hydrolase"/>
</dbReference>
<dbReference type="MEROPS" id="C80.001"/>
<dbReference type="TCDB" id="1.C.57.3.5">
    <property type="family name" value="the clostridial cytotoxin (cct) family"/>
</dbReference>
<dbReference type="EnsemblBacteria" id="AAF94608">
    <property type="protein sequence ID" value="AAF94608"/>
    <property type="gene ID" value="VC_1451"/>
</dbReference>
<dbReference type="KEGG" id="vch:VC_1451"/>
<dbReference type="PATRIC" id="fig|243277.26.peg.1381"/>
<dbReference type="eggNOG" id="COG1073">
    <property type="taxonomic scope" value="Bacteria"/>
</dbReference>
<dbReference type="eggNOG" id="COG2931">
    <property type="taxonomic scope" value="Bacteria"/>
</dbReference>
<dbReference type="eggNOG" id="COG3064">
    <property type="taxonomic scope" value="Bacteria"/>
</dbReference>
<dbReference type="HOGENOM" id="CLU_000137_1_0_6"/>
<dbReference type="SABIO-RK" id="Q9KS12"/>
<dbReference type="EvolutionaryTrace" id="Q9KS12"/>
<dbReference type="Proteomes" id="UP000000584">
    <property type="component" value="Chromosome 1"/>
</dbReference>
<dbReference type="GO" id="GO:0005576">
    <property type="term" value="C:extracellular region"/>
    <property type="evidence" value="ECO:0007669"/>
    <property type="project" value="UniProtKB-SubCell"/>
</dbReference>
<dbReference type="GO" id="GO:0044164">
    <property type="term" value="C:host cell cytosol"/>
    <property type="evidence" value="ECO:0007669"/>
    <property type="project" value="UniProtKB-SubCell"/>
</dbReference>
<dbReference type="GO" id="GO:0020002">
    <property type="term" value="C:host cell plasma membrane"/>
    <property type="evidence" value="ECO:0000314"/>
    <property type="project" value="UniProtKB"/>
</dbReference>
<dbReference type="GO" id="GO:0016020">
    <property type="term" value="C:membrane"/>
    <property type="evidence" value="ECO:0007669"/>
    <property type="project" value="UniProtKB-KW"/>
</dbReference>
<dbReference type="GO" id="GO:0005524">
    <property type="term" value="F:ATP binding"/>
    <property type="evidence" value="ECO:0007669"/>
    <property type="project" value="UniProtKB-KW"/>
</dbReference>
<dbReference type="GO" id="GO:0140772">
    <property type="term" value="F:CoA-dependent peptidyl-lysine N6-palmitoyltransferase activity"/>
    <property type="evidence" value="ECO:0007669"/>
    <property type="project" value="RHEA"/>
</dbReference>
<dbReference type="GO" id="GO:0008234">
    <property type="term" value="F:cysteine-type peptidase activity"/>
    <property type="evidence" value="ECO:0007669"/>
    <property type="project" value="UniProtKB-KW"/>
</dbReference>
<dbReference type="GO" id="GO:0016874">
    <property type="term" value="F:ligase activity"/>
    <property type="evidence" value="ECO:0007669"/>
    <property type="project" value="UniProtKB-KW"/>
</dbReference>
<dbReference type="GO" id="GO:0008289">
    <property type="term" value="F:lipid binding"/>
    <property type="evidence" value="ECO:0007669"/>
    <property type="project" value="UniProtKB-KW"/>
</dbReference>
<dbReference type="GO" id="GO:0046872">
    <property type="term" value="F:metal ion binding"/>
    <property type="evidence" value="ECO:0007669"/>
    <property type="project" value="UniProtKB-KW"/>
</dbReference>
<dbReference type="GO" id="GO:0090729">
    <property type="term" value="F:toxin activity"/>
    <property type="evidence" value="ECO:0007669"/>
    <property type="project" value="UniProtKB-KW"/>
</dbReference>
<dbReference type="GO" id="GO:0007015">
    <property type="term" value="P:actin filament organization"/>
    <property type="evidence" value="ECO:0007669"/>
    <property type="project" value="InterPro"/>
</dbReference>
<dbReference type="GO" id="GO:0006508">
    <property type="term" value="P:proteolysis"/>
    <property type="evidence" value="ECO:0007669"/>
    <property type="project" value="UniProtKB-KW"/>
</dbReference>
<dbReference type="CDD" id="cd20501">
    <property type="entry name" value="C80_RtxA-like"/>
    <property type="match status" value="1"/>
</dbReference>
<dbReference type="CDD" id="cd16840">
    <property type="entry name" value="toxin_MLD"/>
    <property type="match status" value="1"/>
</dbReference>
<dbReference type="FunFam" id="2.160.20.160:FF:000001">
    <property type="entry name" value="RTX toxin"/>
    <property type="match status" value="1"/>
</dbReference>
<dbReference type="FunFam" id="3.40.50.11050:FF:000002">
    <property type="entry name" value="RTX toxin RtxA"/>
    <property type="match status" value="1"/>
</dbReference>
<dbReference type="FunFam" id="3.40.50.1820:FF:000403">
    <property type="entry name" value="RTX toxin RtxA"/>
    <property type="match status" value="1"/>
</dbReference>
<dbReference type="Gene3D" id="1.20.140.180">
    <property type="match status" value="1"/>
</dbReference>
<dbReference type="Gene3D" id="2.160.20.160">
    <property type="match status" value="1"/>
</dbReference>
<dbReference type="Gene3D" id="3.40.50.11050">
    <property type="match status" value="1"/>
</dbReference>
<dbReference type="Gene3D" id="1.10.3680.20">
    <property type="entry name" value="Actin cross-linking domain"/>
    <property type="match status" value="1"/>
</dbReference>
<dbReference type="Gene3D" id="3.40.50.1820">
    <property type="entry name" value="alpha/beta hydrolase"/>
    <property type="match status" value="1"/>
</dbReference>
<dbReference type="Gene3D" id="2.60.120.260">
    <property type="entry name" value="Galactose-binding domain-like"/>
    <property type="match status" value="1"/>
</dbReference>
<dbReference type="InterPro" id="IPR000073">
    <property type="entry name" value="AB_hydrolase_1"/>
</dbReference>
<dbReference type="InterPro" id="IPR029058">
    <property type="entry name" value="AB_hydrolase_fold"/>
</dbReference>
<dbReference type="InterPro" id="IPR032074">
    <property type="entry name" value="ACD_dom"/>
</dbReference>
<dbReference type="InterPro" id="IPR020974">
    <property type="entry name" value="CPD_dom"/>
</dbReference>
<dbReference type="InterPro" id="IPR038383">
    <property type="entry name" value="CPD_dom_sf"/>
</dbReference>
<dbReference type="InterPro" id="IPR020972">
    <property type="entry name" value="Dermonecrotic/RTX_toxin_MLD"/>
</dbReference>
<dbReference type="InterPro" id="IPR049824">
    <property type="entry name" value="RtxA-like_C80"/>
</dbReference>
<dbReference type="InterPro" id="IPR048568">
    <property type="entry name" value="RtxA_C"/>
</dbReference>
<dbReference type="InterPro" id="IPR011509">
    <property type="entry name" value="RtxA_toxin"/>
</dbReference>
<dbReference type="InterPro" id="IPR011049">
    <property type="entry name" value="Serralysin-like_metalloprot_C"/>
</dbReference>
<dbReference type="NCBIfam" id="NF012221">
    <property type="entry name" value="MARTX_Nterm"/>
    <property type="match status" value="1"/>
</dbReference>
<dbReference type="PANTHER" id="PTHR12277">
    <property type="entry name" value="ALPHA/BETA HYDROLASE DOMAIN-CONTAINING PROTEIN"/>
    <property type="match status" value="1"/>
</dbReference>
<dbReference type="PANTHER" id="PTHR12277:SF81">
    <property type="entry name" value="PROTEIN ABHD13"/>
    <property type="match status" value="1"/>
</dbReference>
<dbReference type="Pfam" id="PF00561">
    <property type="entry name" value="Abhydrolase_1"/>
    <property type="match status" value="1"/>
</dbReference>
<dbReference type="Pfam" id="PF16671">
    <property type="entry name" value="ACD"/>
    <property type="match status" value="1"/>
</dbReference>
<dbReference type="Pfam" id="PF11647">
    <property type="entry name" value="MLD"/>
    <property type="match status" value="1"/>
</dbReference>
<dbReference type="Pfam" id="PF11713">
    <property type="entry name" value="Peptidase_C80"/>
    <property type="match status" value="1"/>
</dbReference>
<dbReference type="Pfam" id="PF07634">
    <property type="entry name" value="RtxA"/>
    <property type="match status" value="39"/>
</dbReference>
<dbReference type="Pfam" id="PF21735">
    <property type="entry name" value="RtxA_C"/>
    <property type="match status" value="6"/>
</dbReference>
<dbReference type="SUPFAM" id="SSF53474">
    <property type="entry name" value="alpha/beta-Hydrolases"/>
    <property type="match status" value="1"/>
</dbReference>
<dbReference type="SUPFAM" id="SSF51120">
    <property type="entry name" value="beta-Roll"/>
    <property type="match status" value="2"/>
</dbReference>
<dbReference type="SUPFAM" id="SSF158842">
    <property type="entry name" value="PMT central region-like"/>
    <property type="match status" value="1"/>
</dbReference>
<dbReference type="PROSITE" id="PS51772">
    <property type="entry name" value="ACD"/>
    <property type="match status" value="1"/>
</dbReference>
<dbReference type="PROSITE" id="PS51771">
    <property type="entry name" value="CGT_MARTX_CPD"/>
    <property type="match status" value="1"/>
</dbReference>